<reference key="1">
    <citation type="journal article" date="1987" name="EMBO J.">
        <title>Molecular cloning of the beta-subunit of human prolyl 4-hydroxylase. This subunit and protein disulphide isomerase are products of the same gene.</title>
        <authorList>
            <person name="Pihlajaniemi T."/>
            <person name="Helaakoski T."/>
            <person name="Tasanen K."/>
            <person name="Myllylae R."/>
            <person name="Huhtala M.-L."/>
            <person name="Koivu J."/>
            <person name="Kivirikko K.I."/>
        </authorList>
    </citation>
    <scope>NUCLEOTIDE SEQUENCE [MRNA]</scope>
</reference>
<reference key="2">
    <citation type="journal article" date="1987" name="J. Biol. Chem.">
        <title>The nucleotide sequence of a human cellular thyroid hormone binding protein present in endoplasmic reticulum.</title>
        <authorList>
            <person name="Cheng S.-Y."/>
            <person name="Gong Q.-H."/>
            <person name="Parkison C."/>
            <person name="Robinson E.A."/>
            <person name="Appella E."/>
            <person name="Merlino G.T."/>
            <person name="Pastan I."/>
        </authorList>
    </citation>
    <scope>NUCLEOTIDE SEQUENCE [MRNA]</scope>
</reference>
<reference key="3">
    <citation type="journal article" date="1988" name="J. Biol. Chem.">
        <title>Characterization of the human gene for a polypeptide that acts both as the beta subunit of prolyl 4-hydroxylase and as protein disulfide isomerase.</title>
        <authorList>
            <person name="Tasanen K."/>
            <person name="Parkkonen T."/>
            <person name="Chow L.T."/>
            <person name="Kivirikko K.I."/>
            <person name="Pihlajaniemi T."/>
        </authorList>
    </citation>
    <scope>NUCLEOTIDE SEQUENCE [GENOMIC DNA]</scope>
    <source>
        <tissue>Blood</tissue>
    </source>
</reference>
<reference key="4">
    <citation type="journal article" date="2004" name="Nat. Genet.">
        <title>Complete sequencing and characterization of 21,243 full-length human cDNAs.</title>
        <authorList>
            <person name="Ota T."/>
            <person name="Suzuki Y."/>
            <person name="Nishikawa T."/>
            <person name="Otsuki T."/>
            <person name="Sugiyama T."/>
            <person name="Irie R."/>
            <person name="Wakamatsu A."/>
            <person name="Hayashi K."/>
            <person name="Sato H."/>
            <person name="Nagai K."/>
            <person name="Kimura K."/>
            <person name="Makita H."/>
            <person name="Sekine M."/>
            <person name="Obayashi M."/>
            <person name="Nishi T."/>
            <person name="Shibahara T."/>
            <person name="Tanaka T."/>
            <person name="Ishii S."/>
            <person name="Yamamoto J."/>
            <person name="Saito K."/>
            <person name="Kawai Y."/>
            <person name="Isono Y."/>
            <person name="Nakamura Y."/>
            <person name="Nagahari K."/>
            <person name="Murakami K."/>
            <person name="Yasuda T."/>
            <person name="Iwayanagi T."/>
            <person name="Wagatsuma M."/>
            <person name="Shiratori A."/>
            <person name="Sudo H."/>
            <person name="Hosoiri T."/>
            <person name="Kaku Y."/>
            <person name="Kodaira H."/>
            <person name="Kondo H."/>
            <person name="Sugawara M."/>
            <person name="Takahashi M."/>
            <person name="Kanda K."/>
            <person name="Yokoi T."/>
            <person name="Furuya T."/>
            <person name="Kikkawa E."/>
            <person name="Omura Y."/>
            <person name="Abe K."/>
            <person name="Kamihara K."/>
            <person name="Katsuta N."/>
            <person name="Sato K."/>
            <person name="Tanikawa M."/>
            <person name="Yamazaki M."/>
            <person name="Ninomiya K."/>
            <person name="Ishibashi T."/>
            <person name="Yamashita H."/>
            <person name="Murakawa K."/>
            <person name="Fujimori K."/>
            <person name="Tanai H."/>
            <person name="Kimata M."/>
            <person name="Watanabe M."/>
            <person name="Hiraoka S."/>
            <person name="Chiba Y."/>
            <person name="Ishida S."/>
            <person name="Ono Y."/>
            <person name="Takiguchi S."/>
            <person name="Watanabe S."/>
            <person name="Yosida M."/>
            <person name="Hotuta T."/>
            <person name="Kusano J."/>
            <person name="Kanehori K."/>
            <person name="Takahashi-Fujii A."/>
            <person name="Hara H."/>
            <person name="Tanase T.-O."/>
            <person name="Nomura Y."/>
            <person name="Togiya S."/>
            <person name="Komai F."/>
            <person name="Hara R."/>
            <person name="Takeuchi K."/>
            <person name="Arita M."/>
            <person name="Imose N."/>
            <person name="Musashino K."/>
            <person name="Yuuki H."/>
            <person name="Oshima A."/>
            <person name="Sasaki N."/>
            <person name="Aotsuka S."/>
            <person name="Yoshikawa Y."/>
            <person name="Matsunawa H."/>
            <person name="Ichihara T."/>
            <person name="Shiohata N."/>
            <person name="Sano S."/>
            <person name="Moriya S."/>
            <person name="Momiyama H."/>
            <person name="Satoh N."/>
            <person name="Takami S."/>
            <person name="Terashima Y."/>
            <person name="Suzuki O."/>
            <person name="Nakagawa S."/>
            <person name="Senoh A."/>
            <person name="Mizoguchi H."/>
            <person name="Goto Y."/>
            <person name="Shimizu F."/>
            <person name="Wakebe H."/>
            <person name="Hishigaki H."/>
            <person name="Watanabe T."/>
            <person name="Sugiyama A."/>
            <person name="Takemoto M."/>
            <person name="Kawakami B."/>
            <person name="Yamazaki M."/>
            <person name="Watanabe K."/>
            <person name="Kumagai A."/>
            <person name="Itakura S."/>
            <person name="Fukuzumi Y."/>
            <person name="Fujimori Y."/>
            <person name="Komiyama M."/>
            <person name="Tashiro H."/>
            <person name="Tanigami A."/>
            <person name="Fujiwara T."/>
            <person name="Ono T."/>
            <person name="Yamada K."/>
            <person name="Fujii Y."/>
            <person name="Ozaki K."/>
            <person name="Hirao M."/>
            <person name="Ohmori Y."/>
            <person name="Kawabata A."/>
            <person name="Hikiji T."/>
            <person name="Kobatake N."/>
            <person name="Inagaki H."/>
            <person name="Ikema Y."/>
            <person name="Okamoto S."/>
            <person name="Okitani R."/>
            <person name="Kawakami T."/>
            <person name="Noguchi S."/>
            <person name="Itoh T."/>
            <person name="Shigeta K."/>
            <person name="Senba T."/>
            <person name="Matsumura K."/>
            <person name="Nakajima Y."/>
            <person name="Mizuno T."/>
            <person name="Morinaga M."/>
            <person name="Sasaki M."/>
            <person name="Togashi T."/>
            <person name="Oyama M."/>
            <person name="Hata H."/>
            <person name="Watanabe M."/>
            <person name="Komatsu T."/>
            <person name="Mizushima-Sugano J."/>
            <person name="Satoh T."/>
            <person name="Shirai Y."/>
            <person name="Takahashi Y."/>
            <person name="Nakagawa K."/>
            <person name="Okumura K."/>
            <person name="Nagase T."/>
            <person name="Nomura N."/>
            <person name="Kikuchi H."/>
            <person name="Masuho Y."/>
            <person name="Yamashita R."/>
            <person name="Nakai K."/>
            <person name="Yada T."/>
            <person name="Nakamura Y."/>
            <person name="Ohara O."/>
            <person name="Isogai T."/>
            <person name="Sugano S."/>
        </authorList>
    </citation>
    <scope>NUCLEOTIDE SEQUENCE [LARGE SCALE MRNA]</scope>
    <source>
        <tissue>Synovium</tissue>
    </source>
</reference>
<reference key="5">
    <citation type="submission" date="2005-07" db="EMBL/GenBank/DDBJ databases">
        <authorList>
            <person name="Mural R.J."/>
            <person name="Istrail S."/>
            <person name="Sutton G.G."/>
            <person name="Florea L."/>
            <person name="Halpern A.L."/>
            <person name="Mobarry C.M."/>
            <person name="Lippert R."/>
            <person name="Walenz B."/>
            <person name="Shatkay H."/>
            <person name="Dew I."/>
            <person name="Miller J.R."/>
            <person name="Flanigan M.J."/>
            <person name="Edwards N.J."/>
            <person name="Bolanos R."/>
            <person name="Fasulo D."/>
            <person name="Halldorsson B.V."/>
            <person name="Hannenhalli S."/>
            <person name="Turner R."/>
            <person name="Yooseph S."/>
            <person name="Lu F."/>
            <person name="Nusskern D.R."/>
            <person name="Shue B.C."/>
            <person name="Zheng X.H."/>
            <person name="Zhong F."/>
            <person name="Delcher A.L."/>
            <person name="Huson D.H."/>
            <person name="Kravitz S.A."/>
            <person name="Mouchard L."/>
            <person name="Reinert K."/>
            <person name="Remington K.A."/>
            <person name="Clark A.G."/>
            <person name="Waterman M.S."/>
            <person name="Eichler E.E."/>
            <person name="Adams M.D."/>
            <person name="Hunkapiller M.W."/>
            <person name="Myers E.W."/>
            <person name="Venter J.C."/>
        </authorList>
    </citation>
    <scope>NUCLEOTIDE SEQUENCE [LARGE SCALE GENOMIC DNA]</scope>
</reference>
<reference key="6">
    <citation type="journal article" date="2004" name="Genome Res.">
        <title>The status, quality, and expansion of the NIH full-length cDNA project: the Mammalian Gene Collection (MGC).</title>
        <authorList>
            <consortium name="The MGC Project Team"/>
        </authorList>
    </citation>
    <scope>NUCLEOTIDE SEQUENCE [LARGE SCALE MRNA]</scope>
    <source>
        <tissue>Colon</tissue>
        <tissue>Lung</tissue>
        <tissue>Skin</tissue>
    </source>
</reference>
<reference key="7">
    <citation type="journal article" date="1992" name="J. Biol. Chem.">
        <title>Promoter of the gene for the multifunctional protein disulfide isomerase polypeptide. Functional significance of the six CCAAT boxes and other promoter elements.</title>
        <authorList>
            <person name="Tasanen K."/>
            <person name="Oikarinen J."/>
            <person name="Kivirikko K.I."/>
            <person name="Pihlajaniemi T."/>
        </authorList>
    </citation>
    <scope>NUCLEOTIDE SEQUENCE [GENOMIC DNA] OF 1-24</scope>
</reference>
<reference key="8">
    <citation type="journal article" date="1997" name="Electrophoresis">
        <title>A two-dimensional gel database of human colon carcinoma proteins.</title>
        <authorList>
            <person name="Ji H."/>
            <person name="Reid G.E."/>
            <person name="Moritz R.L."/>
            <person name="Eddes J.S."/>
            <person name="Burgess A.W."/>
            <person name="Simpson R.J."/>
        </authorList>
    </citation>
    <scope>PROTEIN SEQUENCE OF 18-41</scope>
    <source>
        <tissue>Colon carcinoma</tissue>
    </source>
</reference>
<reference key="9">
    <citation type="journal article" date="2003" name="Nat. Biotechnol.">
        <title>Exploring proteomes and analyzing protein processing by mass spectrometric identification of sorted N-terminal peptides.</title>
        <authorList>
            <person name="Gevaert K."/>
            <person name="Goethals M."/>
            <person name="Martens L."/>
            <person name="Van Damme J."/>
            <person name="Staes A."/>
            <person name="Thomas G.R."/>
            <person name="Vandekerckhove J."/>
        </authorList>
    </citation>
    <scope>PROTEIN SEQUENCE OF 18-30</scope>
    <source>
        <tissue>Platelet</tissue>
    </source>
</reference>
<reference key="10">
    <citation type="submission" date="1996-02" db="UniProtKB">
        <authorList>
            <person name="Frutiger S."/>
            <person name="Hughes G.J."/>
        </authorList>
    </citation>
    <scope>PROTEIN SEQUENCE OF 18-29</scope>
    <source>
        <tissue>Liver</tissue>
    </source>
</reference>
<reference key="11">
    <citation type="journal article" date="1990" name="Electrophoresis">
        <title>Development of a database of amino acid sequences for human colon carcinoma proteins separated by two-dimensional polyacrylamide gel electrophoresis.</title>
        <authorList>
            <person name="Ward L.D."/>
            <person name="Hong J."/>
            <person name="Whitehead R.H."/>
            <person name="Simpson R.J."/>
        </authorList>
    </citation>
    <scope>PROTEIN SEQUENCE OF 18-26</scope>
</reference>
<reference key="12">
    <citation type="journal article" date="1992" name="Electrophoresis">
        <title>Human liver protein map: a reference database established by microsequencing and gel comparison.</title>
        <authorList>
            <person name="Hochstrasser D.F."/>
            <person name="Frutiger S."/>
            <person name="Paquet N."/>
            <person name="Bairoch A."/>
            <person name="Ravier F."/>
            <person name="Pasquali C."/>
            <person name="Sanchez J.-C."/>
            <person name="Tissot J.-D."/>
            <person name="Bjellqvist B."/>
            <person name="Vargas R."/>
            <person name="Appel R.D."/>
            <person name="Hughes G.J."/>
        </authorList>
    </citation>
    <scope>PRELIMINARY PROTEIN SEQUENCE OF 19-28</scope>
    <source>
        <tissue>Liver</tissue>
    </source>
</reference>
<reference key="13">
    <citation type="journal article" date="1997" name="J. Biochem.">
        <title>Functions of characteristic Cys-Gly-His-Cys (CGHC) and Gln-Glu-Asp-Leu (QEDL) motifs of microsomal ER-60 protease.</title>
        <authorList>
            <person name="Urade R."/>
            <person name="Oda T."/>
            <person name="Ito H."/>
            <person name="Moriyama T."/>
            <person name="Utsumi S."/>
            <person name="Kito M."/>
        </authorList>
    </citation>
    <scope>PROTEIN SEQUENCE OF 19-28</scope>
</reference>
<reference key="14">
    <citation type="submission" date="2008-12" db="UniProtKB">
        <authorList>
            <person name="Lubec G."/>
            <person name="Vishwanath V."/>
            <person name="Chen W.-Q."/>
            <person name="Sun Y."/>
        </authorList>
    </citation>
    <scope>PROTEIN SEQUENCE OF 201-207; 223-230; 286-308 AND 402-409</scope>
    <scope>IDENTIFICATION BY MASS SPECTROMETRY</scope>
    <source>
        <tissue>Brain</tissue>
        <tissue>Cajal-Retzius cell</tissue>
        <tissue>Fetal brain cortex</tissue>
    </source>
</reference>
<reference key="15">
    <citation type="journal article" date="1988" name="Biochim. Biophys. Acta">
        <title>Characterization of a cDNA for human glutathione-insulin transhydrogenase (protein-disulfide isomerase/oxidoreductase).</title>
        <authorList>
            <person name="Morris J.I."/>
            <person name="Varandani P.T."/>
        </authorList>
    </citation>
    <scope>NUCLEOTIDE SEQUENCE [MRNA] OF 293-508</scope>
</reference>
<reference key="16">
    <citation type="journal article" date="1990" name="Electrophoresis">
        <title>Two-dimensional gel electrophoresis, protein electroblotting and microsequencing: a direct link between proteins and genes.</title>
        <authorList>
            <person name="Bauw G."/>
            <person name="Rasmussen H.H."/>
            <person name="van den Bulcke M."/>
            <person name="van Damme J."/>
            <person name="Puype M."/>
            <person name="Gesser B."/>
            <person name="Celis J.E."/>
            <person name="Vandekerckhove J."/>
        </authorList>
    </citation>
    <scope>PROTEIN SEQUENCE OF 317-325; 350-369 AND 401-419</scope>
</reference>
<reference key="17">
    <citation type="journal article" date="1995" name="Proc. Natl. Acad. Sci. U.S.A.">
        <title>Cloning, baculovirus expression, and characterization of a second mouse prolyl 4-hydroxylase alpha-subunit isoform: formation of an alpha 2 beta 2 tetramer with the protein disulfide-isomerase/beta subunit.</title>
        <authorList>
            <person name="Helaakoski T."/>
            <person name="Annunen P."/>
            <person name="Vuori K."/>
            <person name="Macneil I.A."/>
            <person name="Pihlajaniemi T."/>
            <person name="Kivirikko K.I."/>
        </authorList>
    </citation>
    <scope>INTERACTION WITH P4HA2</scope>
</reference>
<reference key="18">
    <citation type="journal article" date="2000" name="J. Biol. Chem.">
        <title>Protein-disulfide isomerase (PDI) in FRTL5 cells. pH-dependent thyroglobulin/PDI interactions determine a novel PDI function in the post-endoplasmic reticulum of thyrocytes.</title>
        <authorList>
            <person name="Mezghrani A."/>
            <person name="Courageot J."/>
            <person name="Mani J.-C."/>
            <person name="Pugniere M."/>
            <person name="Bastiani P."/>
            <person name="Miquelis R."/>
        </authorList>
    </citation>
    <scope>FUNCTION</scope>
    <scope>SUBCELLULAR LOCATION</scope>
</reference>
<reference key="19">
    <citation type="journal article" date="2001" name="EMBO J.">
        <title>Manipulation of oxidative protein folding and PDI redox state in mammalian cells.</title>
        <authorList>
            <person name="Mezghrani A."/>
            <person name="Fassio A."/>
            <person name="Benham A."/>
            <person name="Simmen T."/>
            <person name="Braakman I."/>
            <person name="Sitia R."/>
        </authorList>
    </citation>
    <scope>INTERACTION WITH ERO1B</scope>
</reference>
<reference key="20">
    <citation type="journal article" date="2001" name="J. Infect. Dis.">
        <title>The catalytic activity of protein disulfide isomerase is involved in human immunodeficiency virus envelope-mediated membrane fusion after CD4 cell binding.</title>
        <authorList>
            <person name="Fenouillet E."/>
            <person name="Barbouche R."/>
            <person name="Courageot J."/>
            <person name="Miquelis R."/>
        </authorList>
    </citation>
    <scope>REDUCTION OF HIV-1 SURFACE PROTEIN GP120 DISULFIDE BONDS</scope>
    <scope>SUBCELLULAR LOCATION</scope>
</reference>
<reference key="21">
    <citation type="journal article" date="2002" name="EMBO J.">
        <title>Is protein disulfide isomerase a redox-dependent molecular chaperone?</title>
        <authorList>
            <person name="Lumb R.A."/>
            <person name="Bulleid N.J."/>
        </authorList>
    </citation>
    <scope>FUNCTION</scope>
</reference>
<reference key="22">
    <citation type="journal article" date="2002" name="J. Biol. Chem.">
        <title>Role of ubiquilin associated with protein-disulfide isomerase in the endoplasmic reticulum in stress-induced apoptotic cell death.</title>
        <authorList>
            <person name="Ko H.S."/>
            <person name="Uehara T."/>
            <person name="Nomura Y."/>
        </authorList>
    </citation>
    <scope>INTERACTION WITH UBQLN1</scope>
</reference>
<reference key="23">
    <citation type="journal article" date="2002" name="J. Biol. Chem.">
        <title>Inhibitors of protein-disulfide isomerase prevent cleavage of disulfide bonds in receptor-bound glycoprotein 120 and prevent HIV-1 entry.</title>
        <authorList>
            <person name="Gallina A."/>
            <person name="Hanley T.M."/>
            <person name="Mandel R."/>
            <person name="Trahey M."/>
            <person name="Broder C.C."/>
            <person name="Viglianti G.A."/>
            <person name="Ryser H.J."/>
        </authorList>
    </citation>
    <scope>REDUCTION OF HIV-1 SURFACE PROTEIN GP120 DISULFIDE BONDS</scope>
</reference>
<reference key="24">
    <citation type="journal article" date="2003" name="J. Biol. Chem.">
        <title>Protein-disulfide isomerase-mediated reduction of two disulfide bonds of HIV envelope glycoprotein 120 occurs post-CXCR4 binding and is required for fusion.</title>
        <authorList>
            <person name="Barbouche R."/>
            <person name="Miquelis R."/>
            <person name="Jones I.M."/>
            <person name="Fenouillet E."/>
        </authorList>
    </citation>
    <scope>REDUCTION OF HIV-1 SURFACE PROTEIN GP120 DISULFIDE BONDS</scope>
</reference>
<reference key="25">
    <citation type="journal article" date="2003" name="J. Proteome Res.">
        <title>Proteomic analysis of early melanosomes: identification of novel melanosomal proteins.</title>
        <authorList>
            <person name="Basrur V."/>
            <person name="Yang F."/>
            <person name="Kushimoto T."/>
            <person name="Higashimoto Y."/>
            <person name="Yasumoto K."/>
            <person name="Valencia J."/>
            <person name="Muller J."/>
            <person name="Vieira W.D."/>
            <person name="Watabe H."/>
            <person name="Shabanowitz J."/>
            <person name="Hearing V.J."/>
            <person name="Hunt D.F."/>
            <person name="Appella E."/>
        </authorList>
    </citation>
    <scope>SUBCELLULAR LOCATION [LARGE SCALE ANALYSIS]</scope>
    <source>
        <tissue>Melanoma</tissue>
    </source>
</reference>
<reference key="26">
    <citation type="journal article" date="2004" name="Biochim. Biophys. Acta">
        <title>Protein disulfide isomerase.</title>
        <authorList>
            <person name="Wilkinson B."/>
            <person name="Gilbert H.F."/>
        </authorList>
    </citation>
    <scope>REVIEW</scope>
</reference>
<reference key="27">
    <citation type="journal article" date="2004" name="Blood">
        <title>Thiol/disulfide exchange is a prerequisite for CXCR4-tropic HIV-1 envelope-mediated T-cell fusion during viral entry.</title>
        <authorList>
            <person name="Markovic I."/>
            <person name="Stantchev T.S."/>
            <person name="Fields K.H."/>
            <person name="Tiffany L.J."/>
            <person name="Tomic M."/>
            <person name="Weiss C.D."/>
            <person name="Broder C.C."/>
            <person name="Strebel K."/>
            <person name="Clouse K.A."/>
        </authorList>
    </citation>
    <scope>REDUCTION OF HIV-1 SURFACE PROTEIN GP120 DISULFIDE BONDS</scope>
</reference>
<reference key="28">
    <citation type="journal article" date="2005" name="Mol. Pharmacol.">
        <title>Glycosaminoglycans and protein disulfide isomerase-mediated reduction of HIV Env.</title>
        <authorList>
            <person name="Barbouche R."/>
            <person name="Lortat-Jacob H."/>
            <person name="Jones I.M."/>
            <person name="Fenouillet E."/>
        </authorList>
    </citation>
    <scope>REDUCTION OF HIV-1 SURFACE PROTEIN GP120 DISULFIDE BONDS</scope>
</reference>
<reference key="29">
    <citation type="journal article" date="2006" name="J. Biol. Chem.">
        <title>Phospholipid transfer activity of microsomal triacylglycerol transfer protein is sufficient for the assembly and secretion of apolipoprotein B lipoproteins.</title>
        <authorList>
            <person name="Rava P."/>
            <person name="Ojakian G.K."/>
            <person name="Shelness G.S."/>
            <person name="Hussain M.M."/>
        </authorList>
    </citation>
    <scope>INTERACTION WITH MTTP</scope>
</reference>
<reference key="30">
    <citation type="journal article" date="2006" name="J. Proteome Res.">
        <title>Proteomic and bioinformatic characterization of the biogenesis and function of melanosomes.</title>
        <authorList>
            <person name="Chi A."/>
            <person name="Valencia J.C."/>
            <person name="Hu Z.-Z."/>
            <person name="Watabe H."/>
            <person name="Yamaguchi H."/>
            <person name="Mangini N.J."/>
            <person name="Huang H."/>
            <person name="Canfield V.A."/>
            <person name="Cheng K.C."/>
            <person name="Yang F."/>
            <person name="Abe R."/>
            <person name="Yamagishi S."/>
            <person name="Shabanowitz J."/>
            <person name="Hearing V.J."/>
            <person name="Wu C."/>
            <person name="Appella E."/>
            <person name="Hunt D.F."/>
        </authorList>
    </citation>
    <scope>SUBCELLULAR LOCATION [LARGE SCALE ANALYSIS]</scope>
    <source>
        <tissue>Melanoma</tissue>
    </source>
</reference>
<reference key="31">
    <citation type="journal article" date="2011" name="BMC Syst. Biol.">
        <title>Initial characterization of the human central proteome.</title>
        <authorList>
            <person name="Burkard T.R."/>
            <person name="Planyavsky M."/>
            <person name="Kaupe I."/>
            <person name="Breitwieser F.P."/>
            <person name="Buerckstuemmer T."/>
            <person name="Bennett K.L."/>
            <person name="Superti-Furga G."/>
            <person name="Colinge J."/>
        </authorList>
    </citation>
    <scope>IDENTIFICATION BY MASS SPECTROMETRY [LARGE SCALE ANALYSIS]</scope>
</reference>
<reference key="32">
    <citation type="journal article" date="2011" name="Proc. Natl. Acad. Sci. U.S.A.">
        <title>Galectin-9 binding to cell surface protein disulfide isomerase regulates the redox environment to enhance T-cell migration and HIV entry.</title>
        <authorList>
            <person name="Bi S."/>
            <person name="Hong P.W."/>
            <person name="Lee B."/>
            <person name="Baum L.G."/>
        </authorList>
    </citation>
    <scope>IDENTIFICATION BY MASS SPECTROMETRY</scope>
    <scope>FUNCTION AS RECEPTOR FOR LGALS9</scope>
    <scope>SUBCELLULAR LOCATION</scope>
</reference>
<reference key="33">
    <citation type="journal article" date="2013" name="J. Lipid Res.">
        <title>Loss of both phospholipid and triglyceride transfer activities of microsomal triglyceride transfer protein in abetalipoproteinemia.</title>
        <authorList>
            <person name="Khatun I."/>
            <person name="Walsh M.T."/>
            <person name="Hussain M.M."/>
        </authorList>
    </citation>
    <scope>INTERACTION WITH MTTP</scope>
    <scope>SUBCELLULAR LOCATION</scope>
</reference>
<reference key="34">
    <citation type="journal article" date="2014" name="J. Proteomics">
        <title>An enzyme assisted RP-RPLC approach for in-depth analysis of human liver phosphoproteome.</title>
        <authorList>
            <person name="Bian Y."/>
            <person name="Song C."/>
            <person name="Cheng K."/>
            <person name="Dong M."/>
            <person name="Wang F."/>
            <person name="Huang J."/>
            <person name="Sun D."/>
            <person name="Wang L."/>
            <person name="Ye M."/>
            <person name="Zou H."/>
        </authorList>
    </citation>
    <scope>IDENTIFICATION BY MASS SPECTROMETRY [LARGE SCALE ANALYSIS]</scope>
    <source>
        <tissue>Liver</tissue>
    </source>
</reference>
<reference key="35">
    <citation type="journal article" date="2015" name="Cell">
        <title>A single kinase generates the majority of the secreted phosphoproteome.</title>
        <authorList>
            <person name="Tagliabracci V.S."/>
            <person name="Wiley S.E."/>
            <person name="Guo X."/>
            <person name="Kinch L.N."/>
            <person name="Durrant E."/>
            <person name="Wen J."/>
            <person name="Xiao J."/>
            <person name="Cui J."/>
            <person name="Nguyen K.B."/>
            <person name="Engel J.L."/>
            <person name="Coon J.J."/>
            <person name="Grishin N."/>
            <person name="Pinna L.A."/>
            <person name="Pagliarini D.J."/>
            <person name="Dixon J.E."/>
        </authorList>
    </citation>
    <scope>PHOSPHORYLATION AT SER-357</scope>
</reference>
<reference key="36">
    <citation type="journal article" date="2015" name="Am. J. Hum. Genet.">
        <title>Cole-Carpenter syndrome is caused by a heterozygous missense mutation in P4HB.</title>
        <authorList>
            <person name="Rauch F."/>
            <person name="Fahiminiya S."/>
            <person name="Majewski J."/>
            <person name="Carrot-Zhang J."/>
            <person name="Boudko S."/>
            <person name="Glorieux F."/>
            <person name="Mort J.S."/>
            <person name="Baechinger H.P."/>
            <person name="Moffatt P."/>
        </authorList>
    </citation>
    <scope>INVOLVEMENT IN CLCRP1</scope>
    <scope>VARIANT CLCRP1 CYS-393</scope>
    <scope>CHARACTERIZATION OF VARIANT CLCRP1 CYS-393</scope>
</reference>
<reference key="37">
    <citation type="journal article" date="2015" name="Circ. Cardiovasc. Genet.">
        <title>A novel abetalipoproteinemia missense mutation highlights the importance of N-Terminal beta-barrel in microsomal triglyceride transfer protein function.</title>
        <authorList>
            <person name="Walsh M.T."/>
            <person name="Iqbal J."/>
            <person name="Josekutty J."/>
            <person name="Soh J."/>
            <person name="Di Leo E."/>
            <person name="Oezaydin E."/>
            <person name="Guenduez M."/>
            <person name="Tarugi P."/>
            <person name="Hussain M.M."/>
        </authorList>
    </citation>
    <scope>INTERACTION WITH MTTP</scope>
</reference>
<reference key="38">
    <citation type="journal article" date="2015" name="Proteomics">
        <title>N-terminome analysis of the human mitochondrial proteome.</title>
        <authorList>
            <person name="Vaca Jacome A.S."/>
            <person name="Rabilloud T."/>
            <person name="Schaeffer-Reiss C."/>
            <person name="Rompais M."/>
            <person name="Ayoub D."/>
            <person name="Lane L."/>
            <person name="Bairoch A."/>
            <person name="Van Dorsselaer A."/>
            <person name="Carapito C."/>
        </authorList>
    </citation>
    <scope>CLEAVAGE OF SIGNAL PEPTIDE [LARGE SCALE ANALYSIS] AFTER ALA-17</scope>
    <scope>IDENTIFICATION BY MASS SPECTROMETRY [LARGE SCALE ANALYSIS]</scope>
</reference>
<reference key="39">
    <citation type="journal article" date="2020" name="EMBO J.">
        <title>Phosphorylation switches protein disulfide isomerase activity to maintain proteostasis and attenuate ER stress.</title>
        <authorList>
            <person name="Yu J."/>
            <person name="Li T."/>
            <person name="Liu Y."/>
            <person name="Wang X."/>
            <person name="Zhang J."/>
            <person name="Wang X."/>
            <person name="Shi G."/>
            <person name="Lou J."/>
            <person name="Wang L."/>
            <person name="Wang C.C."/>
            <person name="Wang L."/>
        </authorList>
    </citation>
    <scope>FUNCTION</scope>
    <scope>CATALYTIC ACTIVITY</scope>
    <scope>INTERACTION WITH ERN1</scope>
    <scope>SUBCELLULAR LOCATION</scope>
    <scope>PHOSPHORYLATION AT SER-331; SER-357 AND SER-427</scope>
    <scope>MUTAGENESIS OF TRP-128; SER-331; SER-357; LEU-403 AND SER-427</scope>
</reference>
<reference key="40">
    <citation type="journal article" date="1995" name="Protein Sci.">
        <title>Nuclear magnetic resonance characterization of the N-terminal thioredoxin-like domain of protein disulfide isomerase.</title>
        <authorList>
            <person name="Kemmink J."/>
            <person name="Darby N.J."/>
            <person name="Dijkstra K."/>
            <person name="Scheek R.M."/>
            <person name="Creighton T.E."/>
        </authorList>
    </citation>
    <scope>STRUCTURE BY NMR OF 18-137</scope>
</reference>
<reference key="41">
    <citation type="journal article" date="1996" name="Biochemistry">
        <title>Structure determination of the N-terminal thioredoxin-like domain of protein disulfide isomerase using multidimensional heteronuclear 13C/15N NMR spectroscopy.</title>
        <authorList>
            <person name="Kemmink J."/>
            <person name="Darby N.J."/>
            <person name="Dijkstra K."/>
            <person name="Nilges M."/>
            <person name="Creighton T.E."/>
        </authorList>
    </citation>
    <scope>STRUCTURE BY NMR OF 18-137</scope>
    <scope>DISULFIDE BOND</scope>
</reference>
<reference key="42">
    <citation type="journal article" date="1999" name="J. Biomol. NMR">
        <title>The structure in solution of the B domain of protein disulfide isomerase.</title>
        <authorList>
            <person name="Kemmink J."/>
            <person name="Dijkstra K."/>
            <person name="Mariani M."/>
            <person name="Scheek R.M."/>
            <person name="Penka E."/>
            <person name="Nilges M."/>
            <person name="Darby N.J."/>
        </authorList>
    </citation>
    <scope>STRUCTURE BY NMR OF 136-245</scope>
</reference>
<reference key="43">
    <citation type="submission" date="2005-11" db="PDB data bank">
        <title>The solution structure of the second thioredoxin-like domain of human protein disulfide-isomerase.</title>
        <authorList>
            <consortium name="RIKEN structural genomics initiative (RSGI)"/>
        </authorList>
    </citation>
    <scope>STRUCTURE BY NMR OF 368-477</scope>
</reference>
<dbReference type="EC" id="5.3.4.1" evidence="20"/>
<dbReference type="EMBL" id="X05130">
    <property type="protein sequence ID" value="CAA28775.1"/>
    <property type="molecule type" value="mRNA"/>
</dbReference>
<dbReference type="EMBL" id="J02783">
    <property type="protein sequence ID" value="AAA61169.1"/>
    <property type="molecule type" value="mRNA"/>
</dbReference>
<dbReference type="EMBL" id="M22806">
    <property type="protein sequence ID" value="AAC13652.1"/>
    <property type="molecule type" value="Genomic_DNA"/>
</dbReference>
<dbReference type="EMBL" id="M22803">
    <property type="protein sequence ID" value="AAC13652.1"/>
    <property type="status" value="JOINED"/>
    <property type="molecule type" value="Genomic_DNA"/>
</dbReference>
<dbReference type="EMBL" id="M22804">
    <property type="protein sequence ID" value="AAC13652.1"/>
    <property type="status" value="JOINED"/>
    <property type="molecule type" value="Genomic_DNA"/>
</dbReference>
<dbReference type="EMBL" id="M22805">
    <property type="protein sequence ID" value="AAC13652.1"/>
    <property type="status" value="JOINED"/>
    <property type="molecule type" value="Genomic_DNA"/>
</dbReference>
<dbReference type="EMBL" id="AK315631">
    <property type="protein sequence ID" value="BAG37999.1"/>
    <property type="molecule type" value="mRNA"/>
</dbReference>
<dbReference type="EMBL" id="CH471099">
    <property type="protein sequence ID" value="EAW89690.1"/>
    <property type="molecule type" value="Genomic_DNA"/>
</dbReference>
<dbReference type="EMBL" id="BC010859">
    <property type="protein sequence ID" value="AAH10859.1"/>
    <property type="molecule type" value="mRNA"/>
</dbReference>
<dbReference type="EMBL" id="BC029617">
    <property type="protein sequence ID" value="AAH29617.1"/>
    <property type="molecule type" value="mRNA"/>
</dbReference>
<dbReference type="EMBL" id="BC071892">
    <property type="protein sequence ID" value="AAH71892.1"/>
    <property type="molecule type" value="mRNA"/>
</dbReference>
<dbReference type="EMBL" id="S37207">
    <property type="protein sequence ID" value="AAB22262.2"/>
    <property type="molecule type" value="Genomic_DNA"/>
</dbReference>
<dbReference type="EMBL" id="X07077">
    <property type="protein sequence ID" value="CAA30112.1"/>
    <property type="molecule type" value="mRNA"/>
</dbReference>
<dbReference type="CCDS" id="CCDS11787.1"/>
<dbReference type="PIR" id="A31913">
    <property type="entry name" value="ISHUSS"/>
</dbReference>
<dbReference type="RefSeq" id="NP_000909.2">
    <property type="nucleotide sequence ID" value="NM_000918.3"/>
</dbReference>
<dbReference type="PDB" id="1BJX">
    <property type="method" value="NMR"/>
    <property type="chains" value="A=136-245"/>
</dbReference>
<dbReference type="PDB" id="1MEK">
    <property type="method" value="NMR"/>
    <property type="chains" value="A=18-137"/>
</dbReference>
<dbReference type="PDB" id="1X5C">
    <property type="method" value="NMR"/>
    <property type="chains" value="A=368-475"/>
</dbReference>
<dbReference type="PDB" id="2BJX">
    <property type="method" value="NMR"/>
    <property type="chains" value="A=136-245"/>
</dbReference>
<dbReference type="PDB" id="2K18">
    <property type="method" value="NMR"/>
    <property type="chains" value="A=135-357"/>
</dbReference>
<dbReference type="PDB" id="3BJ5">
    <property type="method" value="X-ray"/>
    <property type="resolution" value="2.20 A"/>
    <property type="chains" value="A=230-368"/>
</dbReference>
<dbReference type="PDB" id="3UEM">
    <property type="method" value="X-ray"/>
    <property type="resolution" value="2.29 A"/>
    <property type="chains" value="A=137-479"/>
</dbReference>
<dbReference type="PDB" id="4EKZ">
    <property type="method" value="X-ray"/>
    <property type="resolution" value="2.51 A"/>
    <property type="chains" value="A=18-479"/>
</dbReference>
<dbReference type="PDB" id="4EL1">
    <property type="method" value="X-ray"/>
    <property type="resolution" value="2.88 A"/>
    <property type="chains" value="A/B=18-479"/>
</dbReference>
<dbReference type="PDB" id="4JU5">
    <property type="method" value="X-ray"/>
    <property type="resolution" value="2.28 A"/>
    <property type="chains" value="A/B=135-367"/>
</dbReference>
<dbReference type="PDB" id="6I7S">
    <property type="method" value="X-ray"/>
    <property type="resolution" value="2.50 A"/>
    <property type="chains" value="A/B=18-508"/>
</dbReference>
<dbReference type="PDB" id="7ZSC">
    <property type="method" value="X-ray"/>
    <property type="resolution" value="3.85 A"/>
    <property type="chains" value="C/D=18-508"/>
</dbReference>
<dbReference type="PDB" id="8EOJ">
    <property type="method" value="EM"/>
    <property type="resolution" value="3.07 A"/>
    <property type="chains" value="A=1-508"/>
</dbReference>
<dbReference type="PDB" id="8GDY">
    <property type="method" value="X-ray"/>
    <property type="resolution" value="2.05 A"/>
    <property type="chains" value="A/B=18-137"/>
</dbReference>
<dbReference type="PDBsum" id="1BJX"/>
<dbReference type="PDBsum" id="1MEK"/>
<dbReference type="PDBsum" id="1X5C"/>
<dbReference type="PDBsum" id="2BJX"/>
<dbReference type="PDBsum" id="2K18"/>
<dbReference type="PDBsum" id="3BJ5"/>
<dbReference type="PDBsum" id="3UEM"/>
<dbReference type="PDBsum" id="4EKZ"/>
<dbReference type="PDBsum" id="4EL1"/>
<dbReference type="PDBsum" id="4JU5"/>
<dbReference type="PDBsum" id="6I7S"/>
<dbReference type="PDBsum" id="7ZSC"/>
<dbReference type="PDBsum" id="8EOJ"/>
<dbReference type="PDBsum" id="8GDY"/>
<dbReference type="BMRB" id="P07237"/>
<dbReference type="EMDB" id="EMD-28377"/>
<dbReference type="SMR" id="P07237"/>
<dbReference type="BioGRID" id="111073">
    <property type="interactions" value="460"/>
</dbReference>
<dbReference type="CORUM" id="P07237"/>
<dbReference type="DIP" id="DIP-32979N"/>
<dbReference type="FunCoup" id="P07237">
    <property type="interactions" value="1380"/>
</dbReference>
<dbReference type="IntAct" id="P07237">
    <property type="interactions" value="217"/>
</dbReference>
<dbReference type="MINT" id="P07237"/>
<dbReference type="STRING" id="9606.ENSP00000327801"/>
<dbReference type="BindingDB" id="P07237"/>
<dbReference type="ChEMBL" id="CHEMBL5422"/>
<dbReference type="DrugBank" id="DB11638">
    <property type="generic name" value="Artenimol"/>
</dbReference>
<dbReference type="DrugBank" id="DB09130">
    <property type="generic name" value="Copper"/>
</dbReference>
<dbReference type="DrugBank" id="DB03615">
    <property type="generic name" value="Ribostamycin"/>
</dbReference>
<dbReference type="DrugBank" id="DB01593">
    <property type="generic name" value="Zinc"/>
</dbReference>
<dbReference type="DrugBank" id="DB14487">
    <property type="generic name" value="Zinc acetate"/>
</dbReference>
<dbReference type="DrugBank" id="DB14533">
    <property type="generic name" value="Zinc chloride"/>
</dbReference>
<dbReference type="DrugBank" id="DB14548">
    <property type="generic name" value="Zinc sulfate, unspecified form"/>
</dbReference>
<dbReference type="GlyGen" id="P07237">
    <property type="glycosylation" value="8 sites, 2 O-linked glycans (8 sites)"/>
</dbReference>
<dbReference type="iPTMnet" id="P07237"/>
<dbReference type="MetOSite" id="P07237"/>
<dbReference type="PhosphoSitePlus" id="P07237"/>
<dbReference type="SwissPalm" id="P07237"/>
<dbReference type="BioMuta" id="P4HB"/>
<dbReference type="DMDM" id="2507460"/>
<dbReference type="OGP" id="P07237"/>
<dbReference type="REPRODUCTION-2DPAGE" id="IPI00010796"/>
<dbReference type="REPRODUCTION-2DPAGE" id="P07237"/>
<dbReference type="jPOST" id="P07237"/>
<dbReference type="MassIVE" id="P07237"/>
<dbReference type="PaxDb" id="9606-ENSP00000327801"/>
<dbReference type="PeptideAtlas" id="P07237"/>
<dbReference type="PRIDE" id="P07237"/>
<dbReference type="ProteomicsDB" id="51976"/>
<dbReference type="Pumba" id="P07237"/>
<dbReference type="TopDownProteomics" id="P07237"/>
<dbReference type="Antibodypedia" id="3250">
    <property type="antibodies" value="562 antibodies from 44 providers"/>
</dbReference>
<dbReference type="DNASU" id="5034"/>
<dbReference type="Ensembl" id="ENST00000331483.9">
    <property type="protein sequence ID" value="ENSP00000327801.4"/>
    <property type="gene ID" value="ENSG00000185624.16"/>
</dbReference>
<dbReference type="GeneID" id="5034"/>
<dbReference type="KEGG" id="hsa:5034"/>
<dbReference type="MANE-Select" id="ENST00000331483.9">
    <property type="protein sequence ID" value="ENSP00000327801.4"/>
    <property type="RefSeq nucleotide sequence ID" value="NM_000918.4"/>
    <property type="RefSeq protein sequence ID" value="NP_000909.2"/>
</dbReference>
<dbReference type="UCSC" id="uc002kbn.2">
    <property type="organism name" value="human"/>
</dbReference>
<dbReference type="AGR" id="HGNC:8548"/>
<dbReference type="CTD" id="5034"/>
<dbReference type="DisGeNET" id="5034"/>
<dbReference type="GeneCards" id="P4HB"/>
<dbReference type="HGNC" id="HGNC:8548">
    <property type="gene designation" value="P4HB"/>
</dbReference>
<dbReference type="HPA" id="ENSG00000185624">
    <property type="expression patterns" value="Tissue enhanced (liver, pancreas)"/>
</dbReference>
<dbReference type="MalaCards" id="P4HB"/>
<dbReference type="MIM" id="112240">
    <property type="type" value="phenotype"/>
</dbReference>
<dbReference type="MIM" id="176790">
    <property type="type" value="gene"/>
</dbReference>
<dbReference type="neXtProt" id="NX_P07237"/>
<dbReference type="OpenTargets" id="ENSG00000185624"/>
<dbReference type="Orphanet" id="2050">
    <property type="disease" value="Cole-Carpenter syndrome"/>
</dbReference>
<dbReference type="Orphanet" id="216796">
    <property type="disease" value="Osteogenesis imperfecta type 1"/>
</dbReference>
<dbReference type="PharmGKB" id="PA32876"/>
<dbReference type="VEuPathDB" id="HostDB:ENSG00000185624"/>
<dbReference type="eggNOG" id="KOG0190">
    <property type="taxonomic scope" value="Eukaryota"/>
</dbReference>
<dbReference type="GeneTree" id="ENSGT00940000157351"/>
<dbReference type="InParanoid" id="P07237"/>
<dbReference type="OMA" id="FFGMKKD"/>
<dbReference type="OrthoDB" id="72053at2759"/>
<dbReference type="PAN-GO" id="P07237">
    <property type="GO annotations" value="5 GO annotations based on evolutionary models"/>
</dbReference>
<dbReference type="PhylomeDB" id="P07237"/>
<dbReference type="TreeFam" id="TF106381"/>
<dbReference type="BioCyc" id="MetaCyc:HS06845-MONOMER"/>
<dbReference type="BRENDA" id="5.3.4.1">
    <property type="organism ID" value="2681"/>
</dbReference>
<dbReference type="PathwayCommons" id="P07237"/>
<dbReference type="Reactome" id="R-HSA-1650814">
    <property type="pathway name" value="Collagen biosynthesis and modifying enzymes"/>
</dbReference>
<dbReference type="Reactome" id="R-HSA-264876">
    <property type="pathway name" value="Insulin processing"/>
</dbReference>
<dbReference type="Reactome" id="R-HSA-3299685">
    <property type="pathway name" value="Detoxification of Reactive Oxygen Species"/>
</dbReference>
<dbReference type="Reactome" id="R-HSA-381426">
    <property type="pathway name" value="Regulation of Insulin-like Growth Factor (IGF) transport and uptake by Insulin-like Growth Factor Binding Proteins (IGFBPs)"/>
</dbReference>
<dbReference type="Reactome" id="R-HSA-5358346">
    <property type="pathway name" value="Hedgehog ligand biogenesis"/>
</dbReference>
<dbReference type="Reactome" id="R-HSA-8866423">
    <property type="pathway name" value="VLDL assembly"/>
</dbReference>
<dbReference type="Reactome" id="R-HSA-8957275">
    <property type="pathway name" value="Post-translational protein phosphorylation"/>
</dbReference>
<dbReference type="Reactome" id="R-HSA-8963888">
    <property type="pathway name" value="Chylomicron assembly"/>
</dbReference>
<dbReference type="Reactome" id="R-HSA-8964041">
    <property type="pathway name" value="LDL remodeling"/>
</dbReference>
<dbReference type="Reactome" id="R-HSA-9020591">
    <property type="pathway name" value="Interleukin-12 signaling"/>
</dbReference>
<dbReference type="Reactome" id="R-HSA-9020933">
    <property type="pathway name" value="Interleukin-23 signaling"/>
</dbReference>
<dbReference type="SignaLink" id="P07237"/>
<dbReference type="SIGNOR" id="P07237"/>
<dbReference type="BioGRID-ORCS" id="5034">
    <property type="hits" value="26 hits in 1172 CRISPR screens"/>
</dbReference>
<dbReference type="CD-CODE" id="91857CE7">
    <property type="entry name" value="Nucleolus"/>
</dbReference>
<dbReference type="CD-CODE" id="DEE660B4">
    <property type="entry name" value="Stress granule"/>
</dbReference>
<dbReference type="ChiTaRS" id="P4HB">
    <property type="organism name" value="human"/>
</dbReference>
<dbReference type="EvolutionaryTrace" id="P07237"/>
<dbReference type="GeneWiki" id="P4HB"/>
<dbReference type="GenomeRNAi" id="5034"/>
<dbReference type="Pharos" id="P07237">
    <property type="development level" value="Tchem"/>
</dbReference>
<dbReference type="PRO" id="PR:P07237"/>
<dbReference type="Proteomes" id="UP000005640">
    <property type="component" value="Chromosome 17"/>
</dbReference>
<dbReference type="RNAct" id="P07237">
    <property type="molecule type" value="protein"/>
</dbReference>
<dbReference type="Bgee" id="ENSG00000185624">
    <property type="expression patterns" value="Expressed in stromal cell of endometrium and 207 other cell types or tissues"/>
</dbReference>
<dbReference type="ExpressionAtlas" id="P07237">
    <property type="expression patterns" value="baseline and differential"/>
</dbReference>
<dbReference type="GO" id="GO:0005856">
    <property type="term" value="C:cytoskeleton"/>
    <property type="evidence" value="ECO:0000314"/>
    <property type="project" value="ARUK-UCL"/>
</dbReference>
<dbReference type="GO" id="GO:0005829">
    <property type="term" value="C:cytosol"/>
    <property type="evidence" value="ECO:0000314"/>
    <property type="project" value="ARUK-UCL"/>
</dbReference>
<dbReference type="GO" id="GO:0005783">
    <property type="term" value="C:endoplasmic reticulum"/>
    <property type="evidence" value="ECO:0000314"/>
    <property type="project" value="UniProtKB"/>
</dbReference>
<dbReference type="GO" id="GO:0034663">
    <property type="term" value="C:endoplasmic reticulum chaperone complex"/>
    <property type="evidence" value="ECO:0007669"/>
    <property type="project" value="Ensembl"/>
</dbReference>
<dbReference type="GO" id="GO:0005788">
    <property type="term" value="C:endoplasmic reticulum lumen"/>
    <property type="evidence" value="ECO:0000304"/>
    <property type="project" value="Reactome"/>
</dbReference>
<dbReference type="GO" id="GO:0005793">
    <property type="term" value="C:endoplasmic reticulum-Golgi intermediate compartment"/>
    <property type="evidence" value="ECO:0000314"/>
    <property type="project" value="UniProtKB"/>
</dbReference>
<dbReference type="GO" id="GO:0009897">
    <property type="term" value="C:external side of plasma membrane"/>
    <property type="evidence" value="ECO:0000314"/>
    <property type="project" value="UniProtKB"/>
</dbReference>
<dbReference type="GO" id="GO:0070062">
    <property type="term" value="C:extracellular exosome"/>
    <property type="evidence" value="ECO:0007005"/>
    <property type="project" value="UniProtKB"/>
</dbReference>
<dbReference type="GO" id="GO:0005576">
    <property type="term" value="C:extracellular region"/>
    <property type="evidence" value="ECO:0000303"/>
    <property type="project" value="UniProtKB"/>
</dbReference>
<dbReference type="GO" id="GO:0005925">
    <property type="term" value="C:focal adhesion"/>
    <property type="evidence" value="ECO:0007005"/>
    <property type="project" value="UniProtKB"/>
</dbReference>
<dbReference type="GO" id="GO:0030027">
    <property type="term" value="C:lamellipodium"/>
    <property type="evidence" value="ECO:0000314"/>
    <property type="project" value="ARUK-UCL"/>
</dbReference>
<dbReference type="GO" id="GO:0042470">
    <property type="term" value="C:melanosome"/>
    <property type="evidence" value="ECO:0007669"/>
    <property type="project" value="UniProtKB-SubCell"/>
</dbReference>
<dbReference type="GO" id="GO:0016222">
    <property type="term" value="C:procollagen-proline 4-dioxygenase complex"/>
    <property type="evidence" value="ECO:0000314"/>
    <property type="project" value="MGI"/>
</dbReference>
<dbReference type="GO" id="GO:0032991">
    <property type="term" value="C:protein-containing complex"/>
    <property type="evidence" value="ECO:0000314"/>
    <property type="project" value="ARUK-UCL"/>
</dbReference>
<dbReference type="GO" id="GO:0003779">
    <property type="term" value="F:actin binding"/>
    <property type="evidence" value="ECO:0000353"/>
    <property type="project" value="ARUK-UCL"/>
</dbReference>
<dbReference type="GO" id="GO:0019899">
    <property type="term" value="F:enzyme binding"/>
    <property type="evidence" value="ECO:0007669"/>
    <property type="project" value="Ensembl"/>
</dbReference>
<dbReference type="GO" id="GO:0005178">
    <property type="term" value="F:integrin binding"/>
    <property type="evidence" value="ECO:0000353"/>
    <property type="project" value="UniProtKB"/>
</dbReference>
<dbReference type="GO" id="GO:0004656">
    <property type="term" value="F:procollagen-proline 4-dioxygenase activity"/>
    <property type="evidence" value="ECO:0000304"/>
    <property type="project" value="ProtInc"/>
</dbReference>
<dbReference type="GO" id="GO:0003756">
    <property type="term" value="F:protein disulfide isomerase activity"/>
    <property type="evidence" value="ECO:0000314"/>
    <property type="project" value="UniProtKB"/>
</dbReference>
<dbReference type="GO" id="GO:0046982">
    <property type="term" value="F:protein heterodimerization activity"/>
    <property type="evidence" value="ECO:0000314"/>
    <property type="project" value="UniProtKB"/>
</dbReference>
<dbReference type="GO" id="GO:0015035">
    <property type="term" value="F:protein-disulfide reductase activity"/>
    <property type="evidence" value="ECO:0000314"/>
    <property type="project" value="UniProtKB"/>
</dbReference>
<dbReference type="GO" id="GO:0003723">
    <property type="term" value="F:RNA binding"/>
    <property type="evidence" value="ECO:0007005"/>
    <property type="project" value="UniProtKB"/>
</dbReference>
<dbReference type="GO" id="GO:0016972">
    <property type="term" value="F:thiol oxidase activity"/>
    <property type="evidence" value="ECO:0000314"/>
    <property type="project" value="FlyBase"/>
</dbReference>
<dbReference type="GO" id="GO:0071456">
    <property type="term" value="P:cellular response to hypoxia"/>
    <property type="evidence" value="ECO:0000315"/>
    <property type="project" value="BHF-UCL"/>
</dbReference>
<dbReference type="GO" id="GO:0098761">
    <property type="term" value="P:cellular response to interleukin-7"/>
    <property type="evidence" value="ECO:0007669"/>
    <property type="project" value="Ensembl"/>
</dbReference>
<dbReference type="GO" id="GO:0006888">
    <property type="term" value="P:endoplasmic reticulum to Golgi vesicle-mediated transport"/>
    <property type="evidence" value="ECO:0007669"/>
    <property type="project" value="Ensembl"/>
</dbReference>
<dbReference type="GO" id="GO:0030070">
    <property type="term" value="P:insulin processing"/>
    <property type="evidence" value="ECO:0000304"/>
    <property type="project" value="Reactome"/>
</dbReference>
<dbReference type="GO" id="GO:0035722">
    <property type="term" value="P:interleukin-12-mediated signaling pathway"/>
    <property type="evidence" value="ECO:0000304"/>
    <property type="project" value="Reactome"/>
</dbReference>
<dbReference type="GO" id="GO:0038155">
    <property type="term" value="P:interleukin-23-mediated signaling pathway"/>
    <property type="evidence" value="ECO:0000304"/>
    <property type="project" value="Reactome"/>
</dbReference>
<dbReference type="GO" id="GO:0018401">
    <property type="term" value="P:peptidyl-proline hydroxylation to 4-hydroxy-L-proline"/>
    <property type="evidence" value="ECO:0000314"/>
    <property type="project" value="MGI"/>
</dbReference>
<dbReference type="GO" id="GO:0045785">
    <property type="term" value="P:positive regulation of cell adhesion"/>
    <property type="evidence" value="ECO:0000315"/>
    <property type="project" value="ARUK-UCL"/>
</dbReference>
<dbReference type="GO" id="GO:1900026">
    <property type="term" value="P:positive regulation of substrate adhesion-dependent cell spreading"/>
    <property type="evidence" value="ECO:0000315"/>
    <property type="project" value="ARUK-UCL"/>
</dbReference>
<dbReference type="GO" id="GO:2000406">
    <property type="term" value="P:positive regulation of T cell migration"/>
    <property type="evidence" value="ECO:0000314"/>
    <property type="project" value="UniProt"/>
</dbReference>
<dbReference type="GO" id="GO:0046598">
    <property type="term" value="P:positive regulation of viral entry into host cell"/>
    <property type="evidence" value="ECO:0000314"/>
    <property type="project" value="UniProt"/>
</dbReference>
<dbReference type="GO" id="GO:0006457">
    <property type="term" value="P:protein folding"/>
    <property type="evidence" value="ECO:0000318"/>
    <property type="project" value="GO_Central"/>
</dbReference>
<dbReference type="GO" id="GO:0034975">
    <property type="term" value="P:protein folding in endoplasmic reticulum"/>
    <property type="evidence" value="ECO:0000314"/>
    <property type="project" value="FlyBase"/>
</dbReference>
<dbReference type="GO" id="GO:1902175">
    <property type="term" value="P:regulation of oxidative stress-induced intrinsic apoptotic signaling pathway"/>
    <property type="evidence" value="ECO:0000315"/>
    <property type="project" value="BHF-UCL"/>
</dbReference>
<dbReference type="GO" id="GO:0034976">
    <property type="term" value="P:response to endoplasmic reticulum stress"/>
    <property type="evidence" value="ECO:0000315"/>
    <property type="project" value="BHF-UCL"/>
</dbReference>
<dbReference type="CDD" id="cd02961">
    <property type="entry name" value="PDI_a_family"/>
    <property type="match status" value="1"/>
</dbReference>
<dbReference type="CDD" id="cd02995">
    <property type="entry name" value="PDI_a_PDI_a'_C"/>
    <property type="match status" value="1"/>
</dbReference>
<dbReference type="CDD" id="cd02982">
    <property type="entry name" value="PDI_b'_family"/>
    <property type="match status" value="1"/>
</dbReference>
<dbReference type="CDD" id="cd02981">
    <property type="entry name" value="PDI_b_family"/>
    <property type="match status" value="1"/>
</dbReference>
<dbReference type="DisProt" id="DP02637"/>
<dbReference type="FunFam" id="3.40.30.10:FF:000023">
    <property type="entry name" value="Protein disulfide-isomerase"/>
    <property type="match status" value="1"/>
</dbReference>
<dbReference type="FunFam" id="3.40.30.10:FF:000030">
    <property type="entry name" value="Protein disulfide-isomerase"/>
    <property type="match status" value="1"/>
</dbReference>
<dbReference type="FunFam" id="3.40.30.10:FF:000110">
    <property type="entry name" value="Protein disulfide-isomerase"/>
    <property type="match status" value="1"/>
</dbReference>
<dbReference type="FunFam" id="3.40.30.10:FF:000027">
    <property type="entry name" value="protein disulfide-isomerase A2"/>
    <property type="match status" value="1"/>
</dbReference>
<dbReference type="Gene3D" id="3.40.30.10">
    <property type="entry name" value="Glutaredoxin"/>
    <property type="match status" value="4"/>
</dbReference>
<dbReference type="InterPro" id="IPR005788">
    <property type="entry name" value="PDI_thioredoxin-like_dom"/>
</dbReference>
<dbReference type="InterPro" id="IPR005792">
    <property type="entry name" value="Prot_disulphide_isomerase"/>
</dbReference>
<dbReference type="InterPro" id="IPR036249">
    <property type="entry name" value="Thioredoxin-like_sf"/>
</dbReference>
<dbReference type="InterPro" id="IPR017937">
    <property type="entry name" value="Thioredoxin_CS"/>
</dbReference>
<dbReference type="InterPro" id="IPR013766">
    <property type="entry name" value="Thioredoxin_domain"/>
</dbReference>
<dbReference type="NCBIfam" id="TIGR01130">
    <property type="entry name" value="ER_PDI_fam"/>
    <property type="match status" value="1"/>
</dbReference>
<dbReference type="NCBIfam" id="TIGR01126">
    <property type="entry name" value="pdi_dom"/>
    <property type="match status" value="2"/>
</dbReference>
<dbReference type="PANTHER" id="PTHR18929">
    <property type="entry name" value="PROTEIN DISULFIDE ISOMERASE"/>
    <property type="match status" value="1"/>
</dbReference>
<dbReference type="PANTHER" id="PTHR18929:SF101">
    <property type="entry name" value="PROTEIN DISULFIDE-ISOMERASE"/>
    <property type="match status" value="1"/>
</dbReference>
<dbReference type="Pfam" id="PF00085">
    <property type="entry name" value="Thioredoxin"/>
    <property type="match status" value="2"/>
</dbReference>
<dbReference type="Pfam" id="PF13848">
    <property type="entry name" value="Thioredoxin_6"/>
    <property type="match status" value="1"/>
</dbReference>
<dbReference type="PRINTS" id="PR00421">
    <property type="entry name" value="THIOREDOXIN"/>
</dbReference>
<dbReference type="SUPFAM" id="SSF52833">
    <property type="entry name" value="Thioredoxin-like"/>
    <property type="match status" value="4"/>
</dbReference>
<dbReference type="PROSITE" id="PS00014">
    <property type="entry name" value="ER_TARGET"/>
    <property type="match status" value="1"/>
</dbReference>
<dbReference type="PROSITE" id="PS00194">
    <property type="entry name" value="THIOREDOXIN_1"/>
    <property type="match status" value="2"/>
</dbReference>
<dbReference type="PROSITE" id="PS51352">
    <property type="entry name" value="THIOREDOXIN_2"/>
    <property type="match status" value="2"/>
</dbReference>
<feature type="signal peptide" evidence="11 14 23 24 26">
    <location>
        <begin position="1"/>
        <end position="17"/>
    </location>
</feature>
<feature type="chain" id="PRO_0000034195" description="Protein disulfide-isomerase">
    <location>
        <begin position="18"/>
        <end position="508"/>
    </location>
</feature>
<feature type="domain" description="Thioredoxin 1" evidence="3">
    <location>
        <begin position="18"/>
        <end position="134"/>
    </location>
</feature>
<feature type="domain" description="Thioredoxin 2" evidence="3">
    <location>
        <begin position="349"/>
        <end position="475"/>
    </location>
</feature>
<feature type="region of interest" description="Disordered" evidence="4">
    <location>
        <begin position="471"/>
        <end position="508"/>
    </location>
</feature>
<feature type="short sequence motif" description="Prevents secretion from ER">
    <location>
        <begin position="505"/>
        <end position="508"/>
    </location>
</feature>
<feature type="compositionally biased region" description="Acidic residues" evidence="4">
    <location>
        <begin position="478"/>
        <end position="500"/>
    </location>
</feature>
<feature type="active site" description="Nucleophile">
    <location>
        <position position="53"/>
    </location>
</feature>
<feature type="active site" description="Nucleophile">
    <location>
        <position position="56"/>
    </location>
</feature>
<feature type="active site" description="Nucleophile" evidence="1">
    <location>
        <position position="397"/>
    </location>
</feature>
<feature type="active site" description="Nucleophile" evidence="1">
    <location>
        <position position="400"/>
    </location>
</feature>
<feature type="site" description="Contributes to redox potential value">
    <location>
        <position position="54"/>
    </location>
</feature>
<feature type="site" description="Contributes to redox potential value">
    <location>
        <position position="55"/>
    </location>
</feature>
<feature type="site" description="Lowers pKa of C-terminal Cys of first active site">
    <location>
        <position position="120"/>
    </location>
</feature>
<feature type="site" description="Contributes to redox potential value" evidence="1">
    <location>
        <position position="398"/>
    </location>
</feature>
<feature type="site" description="Contributes to redox potential value" evidence="1">
    <location>
        <position position="399"/>
    </location>
</feature>
<feature type="site" description="Lowers pKa of C-terminal Cys of second active site" evidence="1">
    <location>
        <position position="461"/>
    </location>
</feature>
<feature type="modified residue" description="N6-acetyllysine" evidence="2">
    <location>
        <position position="200"/>
    </location>
</feature>
<feature type="modified residue" description="N6-succinyllysine" evidence="2">
    <location>
        <position position="222"/>
    </location>
</feature>
<feature type="modified residue" description="N6-succinyllysine" evidence="2">
    <location>
        <position position="271"/>
    </location>
</feature>
<feature type="modified residue" description="Phosphoserine" evidence="20">
    <location>
        <position position="331"/>
    </location>
</feature>
<feature type="modified residue" description="Phosphoserine; by FAM20C" evidence="18 20">
    <location>
        <position position="357"/>
    </location>
</feature>
<feature type="modified residue" description="Phosphoserine" evidence="20">
    <location>
        <position position="427"/>
    </location>
</feature>
<feature type="disulfide bond" description="Redox-active" evidence="3 22">
    <location>
        <begin position="53"/>
        <end position="56"/>
    </location>
</feature>
<feature type="disulfide bond" description="Redox-active" evidence="3">
    <location>
        <begin position="397"/>
        <end position="400"/>
    </location>
</feature>
<feature type="sequence variant" id="VAR_073440" description="In CLCRP1; impairs ability to act as a disulfide isomerase enzyme; dbSNP:rs786204843." evidence="17">
    <original>Y</original>
    <variation>C</variation>
    <location>
        <position position="393"/>
    </location>
</feature>
<feature type="mutagenesis site" description="Reduced interaction with ERN1. Abolishes interaction with ERN1; when associated with W-403." evidence="20">
    <original>W</original>
    <variation>I</variation>
    <location>
        <position position="128"/>
    </location>
</feature>
<feature type="mutagenesis site" description="Phosphomimetic mutant. Does not affect enzyme or chaperone activity." evidence="20">
    <original>S</original>
    <variation>E</variation>
    <location>
        <position position="331"/>
    </location>
</feature>
<feature type="mutagenesis site" description="Abolishes phosphorylation at this site but protein is still phosphorylated at other sites. No changes in chaperone or enzyme activity." evidence="20">
    <original>S</original>
    <variation>A</variation>
    <location>
        <position position="357"/>
    </location>
</feature>
<feature type="mutagenesis site" description="Phosphomimetic mutant. Reduced resistance to protease digestion, sugesting adoption of an open conformation. Increased chaperone activity. Decreased enzyme activity. Increased binding to ERN1." evidence="20">
    <original>S</original>
    <variation>E</variation>
    <location>
        <position position="357"/>
    </location>
</feature>
<feature type="mutagenesis site" description="Reduced interaction with ERN1. Abolishes interaction with ERN1; when associated with I-128." evidence="20">
    <original>L</original>
    <variation>W</variation>
    <location>
        <position position="403"/>
    </location>
</feature>
<feature type="mutagenesis site" description="Phosphomimetic mutant. Does not affect enzyme or chaperone activity. Does not increase binding to ERN1." evidence="20">
    <original>S</original>
    <variation>E</variation>
    <location>
        <position position="427"/>
    </location>
</feature>
<feature type="sequence conflict" description="In Ref. 1; CAA28775." evidence="25" ref="1">
    <original>AV</original>
    <variation>PW</variation>
    <location>
        <begin position="10"/>
        <end position="11"/>
    </location>
</feature>
<feature type="sequence conflict" description="In Ref. 13; AA sequence." evidence="25" ref="13">
    <original>E</original>
    <variation>D</variation>
    <location>
        <position position="21"/>
    </location>
</feature>
<feature type="sequence conflict" description="In Ref. 13; AA sequence." evidence="25" ref="13">
    <original>D</original>
    <variation>V</variation>
    <location>
        <position position="24"/>
    </location>
</feature>
<feature type="sequence conflict" description="In Ref. 1; CAA28775." evidence="25" ref="1">
    <original>LL</original>
    <variation>PP</variation>
    <location>
        <begin position="44"/>
        <end position="45"/>
    </location>
</feature>
<feature type="sequence conflict" description="In Ref. 1; CAA28775." evidence="25" ref="1">
    <original>Y</original>
    <variation>H</variation>
    <location>
        <position position="49"/>
    </location>
</feature>
<feature type="sequence conflict" description="In Ref. 2; AAA61169." evidence="25" ref="2">
    <original>P</original>
    <variation>R</variation>
    <location>
        <position position="141"/>
    </location>
</feature>
<feature type="sequence conflict" description="In Ref. 2; AAA61169." evidence="25" ref="2">
    <original>LPE</original>
    <variation>RAG</variation>
    <location>
        <begin position="360"/>
        <end position="362"/>
    </location>
</feature>
<feature type="sequence conflict" description="In Ref. 2; AAA61169." evidence="25" ref="2">
    <original>L</original>
    <variation>P</variation>
    <location>
        <position position="372"/>
    </location>
</feature>
<feature type="sequence conflict" description="In Ref. 1; CAA28775." evidence="25" ref="1">
    <original>S</original>
    <variation>G</variation>
    <location>
        <position position="439"/>
    </location>
</feature>
<feature type="sequence conflict" description="In Ref. 1; CAA28775." evidence="25" ref="1">
    <original>K</original>
    <variation>G</variation>
    <location>
        <position position="444"/>
    </location>
</feature>
<feature type="sequence conflict" description="In Ref. 15; CAA30112." evidence="25" ref="15">
    <original>E</original>
    <variation>Q</variation>
    <location>
        <position position="460"/>
    </location>
</feature>
<feature type="sequence conflict" description="In Ref. 1; CAA28775." evidence="25" ref="1">
    <original>D</original>
    <variation>V</variation>
    <location>
        <position position="481"/>
    </location>
</feature>
<feature type="strand" evidence="29">
    <location>
        <begin position="21"/>
        <end position="23"/>
    </location>
</feature>
<feature type="strand" evidence="34">
    <location>
        <begin position="26"/>
        <end position="28"/>
    </location>
</feature>
<feature type="helix" evidence="34">
    <location>
        <begin position="31"/>
        <end position="40"/>
    </location>
</feature>
<feature type="strand" evidence="34">
    <location>
        <begin position="42"/>
        <end position="49"/>
    </location>
</feature>
<feature type="helix" evidence="34">
    <location>
        <begin position="54"/>
        <end position="72"/>
    </location>
</feature>
<feature type="strand" evidence="34">
    <location>
        <begin position="78"/>
        <end position="83"/>
    </location>
</feature>
<feature type="turn" evidence="34">
    <location>
        <begin position="84"/>
        <end position="86"/>
    </location>
</feature>
<feature type="helix" evidence="34">
    <location>
        <begin position="88"/>
        <end position="93"/>
    </location>
</feature>
<feature type="strand" evidence="34">
    <location>
        <begin position="98"/>
        <end position="106"/>
    </location>
</feature>
<feature type="strand" evidence="34">
    <location>
        <begin position="110"/>
        <end position="112"/>
    </location>
</feature>
<feature type="strand" evidence="30">
    <location>
        <begin position="114"/>
        <end position="116"/>
    </location>
</feature>
<feature type="helix" evidence="34">
    <location>
        <begin position="122"/>
        <end position="133"/>
    </location>
</feature>
<feature type="strand" evidence="28">
    <location>
        <begin position="137"/>
        <end position="139"/>
    </location>
</feature>
<feature type="helix" evidence="31">
    <location>
        <begin position="143"/>
        <end position="151"/>
    </location>
</feature>
<feature type="strand" evidence="31">
    <location>
        <begin position="153"/>
        <end position="160"/>
    </location>
</feature>
<feature type="strand" evidence="32">
    <location>
        <begin position="164"/>
        <end position="166"/>
    </location>
</feature>
<feature type="helix" evidence="31">
    <location>
        <begin position="167"/>
        <end position="178"/>
    </location>
</feature>
<feature type="strand" evidence="31">
    <location>
        <begin position="180"/>
        <end position="182"/>
    </location>
</feature>
<feature type="strand" evidence="31">
    <location>
        <begin position="184"/>
        <end position="187"/>
    </location>
</feature>
<feature type="helix" evidence="31">
    <location>
        <begin position="190"/>
        <end position="195"/>
    </location>
</feature>
<feature type="strand" evidence="31">
    <location>
        <begin position="199"/>
        <end position="209"/>
    </location>
</feature>
<feature type="strand" evidence="31">
    <location>
        <begin position="212"/>
        <end position="215"/>
    </location>
</feature>
<feature type="helix" evidence="31">
    <location>
        <begin position="222"/>
        <end position="232"/>
    </location>
</feature>
<feature type="strand" evidence="27">
    <location>
        <begin position="237"/>
        <end position="239"/>
    </location>
</feature>
<feature type="turn" evidence="27">
    <location>
        <begin position="242"/>
        <end position="244"/>
    </location>
</feature>
<feature type="helix" evidence="27">
    <location>
        <begin position="245"/>
        <end position="249"/>
    </location>
</feature>
<feature type="strand" evidence="27">
    <location>
        <begin position="250"/>
        <end position="252"/>
    </location>
</feature>
<feature type="strand" evidence="27">
    <location>
        <begin position="255"/>
        <end position="260"/>
    </location>
</feature>
<feature type="strand" evidence="27">
    <location>
        <begin position="265"/>
        <end position="267"/>
    </location>
</feature>
<feature type="helix" evidence="27">
    <location>
        <begin position="268"/>
        <end position="280"/>
    </location>
</feature>
<feature type="turn" evidence="27">
    <location>
        <begin position="281"/>
        <end position="285"/>
    </location>
</feature>
<feature type="strand" evidence="27">
    <location>
        <begin position="287"/>
        <end position="291"/>
    </location>
</feature>
<feature type="strand" evidence="33">
    <location>
        <begin position="293"/>
        <end position="295"/>
    </location>
</feature>
<feature type="helix" evidence="27">
    <location>
        <begin position="296"/>
        <end position="298"/>
    </location>
</feature>
<feature type="helix" evidence="27">
    <location>
        <begin position="299"/>
        <end position="304"/>
    </location>
</feature>
<feature type="helix" evidence="27">
    <location>
        <begin position="309"/>
        <end position="311"/>
    </location>
</feature>
<feature type="strand" evidence="27">
    <location>
        <begin position="313"/>
        <end position="319"/>
    </location>
</feature>
<feature type="strand" evidence="27">
    <location>
        <begin position="321"/>
        <end position="323"/>
    </location>
</feature>
<feature type="strand" evidence="27">
    <location>
        <begin position="325"/>
        <end position="327"/>
    </location>
</feature>
<feature type="strand" evidence="29">
    <location>
        <begin position="330"/>
        <end position="332"/>
    </location>
</feature>
<feature type="helix" evidence="27">
    <location>
        <begin position="336"/>
        <end position="347"/>
    </location>
</feature>
<feature type="strand" evidence="27">
    <location>
        <begin position="353"/>
        <end position="355"/>
    </location>
</feature>
<feature type="helix" evidence="27">
    <location>
        <begin position="362"/>
        <end position="364"/>
    </location>
</feature>
<feature type="strand" evidence="28">
    <location>
        <begin position="367"/>
        <end position="372"/>
    </location>
</feature>
<feature type="turn" evidence="28">
    <location>
        <begin position="374"/>
        <end position="376"/>
    </location>
</feature>
<feature type="helix" evidence="28">
    <location>
        <begin position="377"/>
        <end position="381"/>
    </location>
</feature>
<feature type="strand" evidence="28">
    <location>
        <begin position="387"/>
        <end position="393"/>
    </location>
</feature>
<feature type="helix" evidence="28">
    <location>
        <begin position="398"/>
        <end position="413"/>
    </location>
</feature>
<feature type="turn" evidence="28">
    <location>
        <begin position="414"/>
        <end position="416"/>
    </location>
</feature>
<feature type="strand" evidence="28">
    <location>
        <begin position="418"/>
        <end position="426"/>
    </location>
</feature>
<feature type="turn" evidence="28">
    <location>
        <begin position="427"/>
        <end position="429"/>
    </location>
</feature>
<feature type="strand" evidence="28">
    <location>
        <begin position="439"/>
        <end position="446"/>
    </location>
</feature>
<feature type="strand" evidence="28">
    <location>
        <begin position="448"/>
        <end position="451"/>
    </location>
</feature>
<feature type="helix" evidence="28">
    <location>
        <begin position="463"/>
        <end position="470"/>
    </location>
</feature>
<feature type="turn" evidence="28">
    <location>
        <begin position="471"/>
        <end position="473"/>
    </location>
</feature>
<feature type="strand" evidence="33">
    <location>
        <begin position="475"/>
        <end position="477"/>
    </location>
</feature>
<evidence type="ECO:0000250" key="1"/>
<evidence type="ECO:0000250" key="2">
    <source>
        <dbReference type="UniProtKB" id="P09103"/>
    </source>
</evidence>
<evidence type="ECO:0000255" key="3">
    <source>
        <dbReference type="PROSITE-ProRule" id="PRU00691"/>
    </source>
</evidence>
<evidence type="ECO:0000256" key="4">
    <source>
        <dbReference type="SAM" id="MobiDB-lite"/>
    </source>
</evidence>
<evidence type="ECO:0000269" key="5">
    <source>
    </source>
</evidence>
<evidence type="ECO:0000269" key="6">
    <source>
    </source>
</evidence>
<evidence type="ECO:0000269" key="7">
    <source>
    </source>
</evidence>
<evidence type="ECO:0000269" key="8">
    <source>
    </source>
</evidence>
<evidence type="ECO:0000269" key="9">
    <source>
    </source>
</evidence>
<evidence type="ECO:0000269" key="10">
    <source>
    </source>
</evidence>
<evidence type="ECO:0000269" key="11">
    <source>
    </source>
</evidence>
<evidence type="ECO:0000269" key="12">
    <source>
    </source>
</evidence>
<evidence type="ECO:0000269" key="13">
    <source>
    </source>
</evidence>
<evidence type="ECO:0000269" key="14">
    <source>
    </source>
</evidence>
<evidence type="ECO:0000269" key="15">
    <source>
    </source>
</evidence>
<evidence type="ECO:0000269" key="16">
    <source>
    </source>
</evidence>
<evidence type="ECO:0000269" key="17">
    <source>
    </source>
</evidence>
<evidence type="ECO:0000269" key="18">
    <source>
    </source>
</evidence>
<evidence type="ECO:0000269" key="19">
    <source>
    </source>
</evidence>
<evidence type="ECO:0000269" key="20">
    <source>
    </source>
</evidence>
<evidence type="ECO:0000269" key="21">
    <source>
    </source>
</evidence>
<evidence type="ECO:0000269" key="22">
    <source>
    </source>
</evidence>
<evidence type="ECO:0000269" key="23">
    <source>
    </source>
</evidence>
<evidence type="ECO:0000269" key="24">
    <source ref="10"/>
</evidence>
<evidence type="ECO:0000305" key="25"/>
<evidence type="ECO:0007744" key="26">
    <source>
    </source>
</evidence>
<evidence type="ECO:0007829" key="27">
    <source>
        <dbReference type="PDB" id="3BJ5"/>
    </source>
</evidence>
<evidence type="ECO:0007829" key="28">
    <source>
        <dbReference type="PDB" id="3UEM"/>
    </source>
</evidence>
<evidence type="ECO:0007829" key="29">
    <source>
        <dbReference type="PDB" id="4EKZ"/>
    </source>
</evidence>
<evidence type="ECO:0007829" key="30">
    <source>
        <dbReference type="PDB" id="4EL1"/>
    </source>
</evidence>
<evidence type="ECO:0007829" key="31">
    <source>
        <dbReference type="PDB" id="4JU5"/>
    </source>
</evidence>
<evidence type="ECO:0007829" key="32">
    <source>
        <dbReference type="PDB" id="6I7S"/>
    </source>
</evidence>
<evidence type="ECO:0007829" key="33">
    <source>
        <dbReference type="PDB" id="8EOJ"/>
    </source>
</evidence>
<evidence type="ECO:0007829" key="34">
    <source>
        <dbReference type="PDB" id="8GDY"/>
    </source>
</evidence>
<protein>
    <recommendedName>
        <fullName>Protein disulfide-isomerase</fullName>
        <shortName>PDI</shortName>
        <ecNumber evidence="20">5.3.4.1</ecNumber>
    </recommendedName>
    <alternativeName>
        <fullName>Cellular thyroid hormone-binding protein</fullName>
    </alternativeName>
    <alternativeName>
        <fullName>Prolyl 4-hydroxylase subunit beta</fullName>
    </alternativeName>
    <alternativeName>
        <fullName>p55</fullName>
    </alternativeName>
</protein>
<gene>
    <name type="primary">P4HB</name>
    <name type="synonym">ERBA2L</name>
    <name type="synonym">PDI</name>
    <name type="synonym">PDIA1</name>
    <name type="synonym">PO4DB</name>
</gene>
<sequence length="508" mass="57116">MLRRALLCLAVAALVRADAPEEEDHVLVLRKSNFAEALAAHKYLLVEFYAPWCGHCKALAPEYAKAAGKLKAEGSEIRLAKVDATEESDLAQQYGVRGYPTIKFFRNGDTASPKEYTAGREADDIVNWLKKRTGPAATTLPDGAAAESLVESSEVAVIGFFKDVESDSAKQFLQAAEAIDDIPFGITSNSDVFSKYQLDKDGVVLFKKFDEGRNNFEGEVTKENLLDFIKHNQLPLVIEFTEQTAPKIFGGEIKTHILLFLPKSVSDYDGKLSNFKTAAESFKGKILFIFIDSDHTDNQRILEFFGLKKEECPAVRLITLEEEMTKYKPESEELTAERITEFCHRFLEGKIKPHLMSQELPEDWDKQPVKVLVGKNFEDVAFDEKKNVFVEFYAPWCGHCKQLAPIWDKLGETYKDHENIVIAKMDSTANEVEAVKVHSFPTLKFFPASADRTVIDYNGERTLDGFKKFLESGGQDGAGDDDDLEDLEEAEEPDMEEDDDQKAVKDEL</sequence>
<proteinExistence type="evidence at protein level"/>
<comment type="function">
    <text evidence="5 9 15 20">This multifunctional protein catalyzes the formation, breakage and rearrangement of disulfide bonds. At the cell surface, seems to act as a reductase that cleaves disulfide bonds of proteins attached to the cell. May therefore cause structural modifications of exofacial proteins. Inside the cell, seems to form/rearrange disulfide bonds of nascent proteins. At high concentrations and following phosphorylation by FAM20C, functions as a chaperone that inhibits aggregation of misfolded proteins (PubMed:32149426). At low concentrations, facilitates aggregation (anti-chaperone activity). May be involved with other chaperones in the structural modification of the TG precursor in hormone biogenesis. Also acts as a structural subunit of various enzymes such as prolyl 4-hydroxylase and microsomal triacylglycerol transfer protein MTTP. Receptor for LGALS9; the interaction retains P4HB at the cell surface of Th2 T helper cells, increasing disulfide reductase activity at the plasma membrane, altering the plasma membrane redox state and enhancing cell migration (PubMed:21670307).</text>
</comment>
<comment type="catalytic activity">
    <reaction evidence="20">
        <text>Catalyzes the rearrangement of -S-S- bonds in proteins.</text>
        <dbReference type="EC" id="5.3.4.1"/>
    </reaction>
</comment>
<comment type="subunit">
    <text evidence="1 2 7 8 12 16 19 20 21">Heterodimer; heterodimerizes with the protein microsomal triglyceride transfer MTTP (PubMed:16478722, PubMed:23475612, PubMed:26224785). Homodimer. Monomers and homotetramers may also occur. Interacts with P4HA2, forming a heterotetramer consisting of 2 alpha subunits (P4HA2) and 2 beta (P4HB), where P4HB plays the role of a structural subunit; this tetramer catalyzes the formation of 4-hydroxyproline in collagen (PubMed:7753822). Also constitutes the structural subunit of the microsomal triacylglycerol transfer protein MTTP in mammalian cells. Stabilizes both enzymes and retain them in the ER without contributing to the catalytic activity (By similarity). Binds UBQLN1 (PubMed:12095988). Interacts with ERO1B (PubMed:11707400). Binds to CD4, and upon HIV-1 binding to the cell membrane, is part of a P4HB/PDI-CD4-CXCR4-gp120 complex. Interacts with ILDR2 (By similarity). Interacts with ERN1/IRE1A (via N-terminus); the interaction is enhanced by phosphorylation of P4HB by FAM20C in response to endoplasmic reticulum stress and results in attenuation of ERN1 activity (PubMed:32149426).</text>
</comment>
<comment type="interaction">
    <interactant intactId="EBI-395883">
        <id>P07237</id>
    </interactant>
    <interactant intactId="EBI-8464238">
        <id>Q9NU02</id>
        <label>ANKEF1</label>
    </interactant>
    <organismsDiffer>false</organismsDiffer>
    <experiments>3</experiments>
</comment>
<comment type="interaction">
    <interactant intactId="EBI-395883">
        <id>P07237</id>
    </interactant>
    <interactant intactId="EBI-1805814">
        <id>Q96RK4</id>
        <label>BBS4</label>
    </interactant>
    <organismsDiffer>false</organismsDiffer>
    <experiments>3</experiments>
</comment>
<comment type="interaction">
    <interactant intactId="EBI-395883">
        <id>P07237</id>
    </interactant>
    <interactant intactId="EBI-526406">
        <id>O43521</id>
        <label>BCL2L11</label>
    </interactant>
    <organismsDiffer>false</organismsDiffer>
    <experiments>3</experiments>
</comment>
<comment type="interaction">
    <interactant intactId="EBI-395883">
        <id>P07237</id>
    </interactant>
    <interactant intactId="EBI-1028956">
        <id>P17655</id>
        <label>CAPN2</label>
    </interactant>
    <organismsDiffer>false</organismsDiffer>
    <experiments>3</experiments>
</comment>
<comment type="interaction">
    <interactant intactId="EBI-395883">
        <id>P07237</id>
    </interactant>
    <interactant intactId="EBI-742887">
        <id>Q8TAP6</id>
        <label>CEP76</label>
    </interactant>
    <organismsDiffer>false</organismsDiffer>
    <experiments>3</experiments>
</comment>
<comment type="interaction">
    <interactant intactId="EBI-395883">
        <id>P07237</id>
    </interactant>
    <interactant intactId="EBI-11953200">
        <id>Q494V2-2</id>
        <label>CFAP100</label>
    </interactant>
    <organismsDiffer>false</organismsDiffer>
    <experiments>3</experiments>
</comment>
<comment type="interaction">
    <interactant intactId="EBI-395883">
        <id>P07237</id>
    </interactant>
    <interactant intactId="EBI-2321769">
        <id>Q9Y6H1</id>
        <label>CHCHD2</label>
    </interactant>
    <organismsDiffer>false</organismsDiffer>
    <experiments>3</experiments>
</comment>
<comment type="interaction">
    <interactant intactId="EBI-395883">
        <id>P07237</id>
    </interactant>
    <interactant intactId="EBI-741032">
        <id>Q8NE01</id>
        <label>CNNM3</label>
    </interactant>
    <organismsDiffer>false</organismsDiffer>
    <experiments>3</experiments>
</comment>
<comment type="interaction">
    <interactant intactId="EBI-395883">
        <id>P07237</id>
    </interactant>
    <interactant intactId="EBI-8832659">
        <id>P09228</id>
        <label>CST2</label>
    </interactant>
    <organismsDiffer>false</organismsDiffer>
    <experiments>3</experiments>
</comment>
<comment type="interaction">
    <interactant intactId="EBI-395883">
        <id>P07237</id>
    </interactant>
    <interactant intactId="EBI-742054">
        <id>Q96D03</id>
        <label>DDIT4L</label>
    </interactant>
    <organismsDiffer>false</organismsDiffer>
    <experiments>3</experiments>
</comment>
<comment type="interaction">
    <interactant intactId="EBI-395883">
        <id>P07237</id>
    </interactant>
    <interactant intactId="EBI-2564539">
        <id>Q96HE7</id>
        <label>ERO1A</label>
    </interactant>
    <organismsDiffer>false</organismsDiffer>
    <experiments>2</experiments>
</comment>
<comment type="interaction">
    <interactant intactId="EBI-395883">
        <id>P07237</id>
    </interactant>
    <interactant intactId="EBI-3957005">
        <id>Q53R41</id>
        <label>FASTKD1</label>
    </interactant>
    <organismsDiffer>false</organismsDiffer>
    <experiments>3</experiments>
</comment>
<comment type="interaction">
    <interactant intactId="EBI-395883">
        <id>P07237</id>
    </interactant>
    <interactant intactId="EBI-8803802">
        <id>Q9ULW2</id>
        <label>FZD10</label>
    </interactant>
    <organismsDiffer>false</organismsDiffer>
    <experiments>3</experiments>
</comment>
<comment type="interaction">
    <interactant intactId="EBI-395883">
        <id>P07237</id>
    </interactant>
    <interactant intactId="EBI-752049">
        <id>Q8NEG0</id>
        <label>GARIN6</label>
    </interactant>
    <organismsDiffer>false</organismsDiffer>
    <experiments>3</experiments>
</comment>
<comment type="interaction">
    <interactant intactId="EBI-395883">
        <id>P07237</id>
    </interactant>
    <interactant intactId="EBI-357130">
        <id>P62873</id>
        <label>GNB1</label>
    </interactant>
    <organismsDiffer>false</organismsDiffer>
    <experiments>3</experiments>
</comment>
<comment type="interaction">
    <interactant intactId="EBI-395883">
        <id>P07237</id>
    </interactant>
    <interactant intactId="EBI-747754">
        <id>P28799</id>
        <label>GRN</label>
    </interactant>
    <organismsDiffer>false</organismsDiffer>
    <experiments>4</experiments>
</comment>
<comment type="interaction">
    <interactant intactId="EBI-395883">
        <id>P07237</id>
    </interactant>
    <interactant intactId="EBI-347472">
        <id>Q8TCT9</id>
        <label>HM13</label>
    </interactant>
    <organismsDiffer>false</organismsDiffer>
    <experiments>3</experiments>
</comment>
<comment type="interaction">
    <interactant intactId="EBI-395883">
        <id>P07237</id>
    </interactant>
    <interactant intactId="EBI-10973851">
        <id>Q8N4N3-2</id>
        <label>KLHL36</label>
    </interactant>
    <organismsDiffer>false</organismsDiffer>
    <experiments>3</experiments>
</comment>
<comment type="interaction">
    <interactant intactId="EBI-395883">
        <id>P07237</id>
    </interactant>
    <interactant intactId="EBI-739890">
        <id>Q9P2K6</id>
        <label>KLHL42</label>
    </interactant>
    <organismsDiffer>false</organismsDiffer>
    <experiments>3</experiments>
</comment>
<comment type="interaction">
    <interactant intactId="EBI-395883">
        <id>P07237</id>
    </interactant>
    <interactant intactId="EBI-702198">
        <id>P02538</id>
        <label>KRT6A</label>
    </interactant>
    <organismsDiffer>false</organismsDiffer>
    <experiments>3</experiments>
</comment>
<comment type="interaction">
    <interactant intactId="EBI-395883">
        <id>P07237</id>
    </interactant>
    <interactant intactId="EBI-11953334">
        <id>P60328</id>
        <label>KRTAP12-3</label>
    </interactant>
    <organismsDiffer>false</organismsDiffer>
    <experiments>3</experiments>
</comment>
<comment type="interaction">
    <interactant intactId="EBI-395883">
        <id>P07237</id>
    </interactant>
    <interactant intactId="EBI-11953846">
        <id>Q52LG2</id>
        <label>KRTAP13-2</label>
    </interactant>
    <organismsDiffer>false</organismsDiffer>
    <experiments>3</experiments>
</comment>
<comment type="interaction">
    <interactant intactId="EBI-395883">
        <id>P07237</id>
    </interactant>
    <interactant intactId="EBI-10302392">
        <id>Q9BYQ6</id>
        <label>KRTAP4-11</label>
    </interactant>
    <organismsDiffer>false</organismsDiffer>
    <experiments>3</experiments>
</comment>
<comment type="interaction">
    <interactant intactId="EBI-395883">
        <id>P07237</id>
    </interactant>
    <interactant intactId="EBI-3958099">
        <id>P26371</id>
        <label>KRTAP5-9</label>
    </interactant>
    <organismsDiffer>false</organismsDiffer>
    <experiments>3</experiments>
</comment>
<comment type="interaction">
    <interactant intactId="EBI-395883">
        <id>P07237</id>
    </interactant>
    <interactant intactId="EBI-22311199">
        <id>Q3LI67</id>
        <label>KRTAP6-3</label>
    </interactant>
    <organismsDiffer>false</organismsDiffer>
    <experiments>3</experiments>
</comment>
<comment type="interaction">
    <interactant intactId="EBI-395883">
        <id>P07237</id>
    </interactant>
    <interactant intactId="EBI-11958364">
        <id>Q9BYQ0</id>
        <label>KRTAP9-8</label>
    </interactant>
    <organismsDiffer>false</organismsDiffer>
    <experiments>3</experiments>
</comment>
<comment type="interaction">
    <interactant intactId="EBI-395883">
        <id>P07237</id>
    </interactant>
    <interactant intactId="EBI-10245913">
        <id>Q5T7P3</id>
        <label>LCE1B</label>
    </interactant>
    <organismsDiffer>false</organismsDiffer>
    <experiments>3</experiments>
</comment>
<comment type="interaction">
    <interactant intactId="EBI-395883">
        <id>P07237</id>
    </interactant>
    <interactant intactId="EBI-10246750">
        <id>Q5TA82</id>
        <label>LCE2D</label>
    </interactant>
    <organismsDiffer>false</organismsDiffer>
    <experiments>3</experiments>
</comment>
<comment type="interaction">
    <interactant intactId="EBI-395883">
        <id>P07237</id>
    </interactant>
    <interactant intactId="EBI-10246358">
        <id>Q5TA78</id>
        <label>LCE4A</label>
    </interactant>
    <organismsDiffer>false</organismsDiffer>
    <experiments>3</experiments>
</comment>
<comment type="interaction">
    <interactant intactId="EBI-395883">
        <id>P07237</id>
    </interactant>
    <interactant intactId="EBI-11911016">
        <id>P80188</id>
        <label>LCN2</label>
    </interactant>
    <organismsDiffer>false</organismsDiffer>
    <experiments>3</experiments>
</comment>
<comment type="interaction">
    <interactant intactId="EBI-395883">
        <id>P07237</id>
    </interactant>
    <interactant intactId="EBI-7910762">
        <id>Q6PJG9</id>
        <label>LRFN4</label>
    </interactant>
    <organismsDiffer>false</organismsDiffer>
    <experiments>3</experiments>
</comment>
<comment type="interaction">
    <interactant intactId="EBI-395883">
        <id>P07237</id>
    </interactant>
    <interactant intactId="EBI-366233">
        <id>P10636-8</id>
        <label>MAPT</label>
    </interactant>
    <organismsDiffer>false</organismsDiffer>
    <experiments>6</experiments>
</comment>
<comment type="interaction">
    <interactant intactId="EBI-395883">
        <id>P07237</id>
    </interactant>
    <interactant intactId="EBI-6979889">
        <id>Q92692-2</id>
        <label>NECTIN2</label>
    </interactant>
    <organismsDiffer>false</organismsDiffer>
    <experiments>3</experiments>
</comment>
<comment type="interaction">
    <interactant intactId="EBI-395883">
        <id>P07237</id>
    </interactant>
    <interactant intactId="EBI-10190763">
        <id>O94818-2</id>
        <label>NOL4</label>
    </interactant>
    <organismsDiffer>false</organismsDiffer>
    <experiments>3</experiments>
</comment>
<comment type="interaction">
    <interactant intactId="EBI-395883">
        <id>P07237</id>
    </interactant>
    <interactant intactId="EBI-12027160">
        <id>Q9P121-3</id>
        <label>NTM</label>
    </interactant>
    <organismsDiffer>false</organismsDiffer>
    <experiments>3</experiments>
</comment>
<comment type="interaction">
    <interactant intactId="EBI-395883">
        <id>P07237</id>
    </interactant>
    <interactant intactId="EBI-10234557">
        <id>Q14990</id>
        <label>ODF1</label>
    </interactant>
    <organismsDiffer>false</organismsDiffer>
    <experiments>3</experiments>
</comment>
<comment type="interaction">
    <interactant intactId="EBI-395883">
        <id>P07237</id>
    </interactant>
    <interactant intactId="EBI-348033">
        <id>O15460</id>
        <label>P4HA2</label>
    </interactant>
    <organismsDiffer>false</organismsDiffer>
    <experiments>3</experiments>
</comment>
<comment type="interaction">
    <interactant intactId="EBI-395883">
        <id>P07237</id>
    </interactant>
    <interactant intactId="EBI-2557276">
        <id>O15534</id>
        <label>PER1</label>
    </interactant>
    <organismsDiffer>false</organismsDiffer>
    <experiments>3</experiments>
</comment>
<comment type="interaction">
    <interactant intactId="EBI-395883">
        <id>P07237</id>
    </interactant>
    <interactant intactId="EBI-12105500">
        <id>Q63HM9</id>
        <label>PLCXD3</label>
    </interactant>
    <organismsDiffer>false</organismsDiffer>
    <experiments>3</experiments>
</comment>
<comment type="interaction">
    <interactant intactId="EBI-395883">
        <id>P07237</id>
    </interactant>
    <interactant intactId="EBI-746202">
        <id>O00444</id>
        <label>PLK4</label>
    </interactant>
    <organismsDiffer>false</organismsDiffer>
    <experiments>3</experiments>
</comment>
<comment type="interaction">
    <interactant intactId="EBI-395883">
        <id>P07237</id>
    </interactant>
    <interactant intactId="EBI-2211957">
        <id>Q13162</id>
        <label>PRDX4</label>
    </interactant>
    <organismsDiffer>false</organismsDiffer>
    <experiments>2</experiments>
</comment>
<comment type="interaction">
    <interactant intactId="EBI-395883">
        <id>P07237</id>
    </interactant>
    <interactant intactId="EBI-620823">
        <id>Q09028</id>
        <label>RBBP4</label>
    </interactant>
    <organismsDiffer>false</organismsDiffer>
    <experiments>3</experiments>
</comment>
<comment type="interaction">
    <interactant intactId="EBI-395883">
        <id>P07237</id>
    </interactant>
    <interactant intactId="EBI-346595">
        <id>Q96B97</id>
        <label>SH3KBP1</label>
    </interactant>
    <organismsDiffer>false</organismsDiffer>
    <experiments>3</experiments>
</comment>
<comment type="interaction">
    <interactant intactId="EBI-395883">
        <id>P07237</id>
    </interactant>
    <interactant intactId="EBI-11995314">
        <id>Q86WV1-2</id>
        <label>SKAP1</label>
    </interactant>
    <organismsDiffer>false</organismsDiffer>
    <experiments>3</experiments>
</comment>
<comment type="interaction">
    <interactant intactId="EBI-395883">
        <id>P07237</id>
    </interactant>
    <interactant intactId="EBI-11722858">
        <id>Q8WUG5</id>
        <label>SLC22A17</label>
    </interactant>
    <organismsDiffer>false</organismsDiffer>
    <experiments>3</experiments>
</comment>
<comment type="interaction">
    <interactant intactId="EBI-395883">
        <id>P07237</id>
    </interactant>
    <interactant intactId="EBI-747259">
        <id>Q03518</id>
        <label>TAP1</label>
    </interactant>
    <organismsDiffer>false</organismsDiffer>
    <experiments>4</experiments>
</comment>
<comment type="interaction">
    <interactant intactId="EBI-395883">
        <id>P07237</id>
    </interactant>
    <interactant intactId="EBI-12833746">
        <id>Q5T0J7-2</id>
        <label>TEX35</label>
    </interactant>
    <organismsDiffer>false</organismsDiffer>
    <experiments>3</experiments>
</comment>
<comment type="interaction">
    <interactant intactId="EBI-395883">
        <id>P07237</id>
    </interactant>
    <interactant intactId="EBI-779636">
        <id>P01137</id>
        <label>TGFB1</label>
    </interactant>
    <organismsDiffer>false</organismsDiffer>
    <experiments>3</experiments>
</comment>
<comment type="interaction">
    <interactant intactId="EBI-395883">
        <id>P07237</id>
    </interactant>
    <interactant intactId="EBI-12310821">
        <id>Q9UC07-2</id>
        <label>ZNF69</label>
    </interactant>
    <organismsDiffer>false</organismsDiffer>
    <experiments>3</experiments>
</comment>
<comment type="interaction">
    <interactant intactId="EBI-395883">
        <id>P07237</id>
    </interactant>
    <interactant intactId="EBI-26435798">
        <id>Q2GL86</id>
        <label>APH_0248</label>
    </interactant>
    <organismsDiffer>true</organismsDiffer>
    <experiments>3</experiments>
</comment>
<comment type="subcellular location">
    <subcellularLocation>
        <location evidence="16 20">Endoplasmic reticulum</location>
    </subcellularLocation>
    <subcellularLocation>
        <location evidence="5 16">Endoplasmic reticulum lumen</location>
    </subcellularLocation>
    <subcellularLocation>
        <location evidence="10 13">Melanosome</location>
    </subcellularLocation>
    <subcellularLocation>
        <location evidence="15">Cell membrane</location>
        <topology evidence="25">Peripheral membrane protein</topology>
    </subcellularLocation>
    <text evidence="5 6 16 25">Highly abundant. In some cell types, seems to be also secreted or associated with the plasma membrane, where it undergoes constant shedding and replacement from intracellular sources (Probable). Localizes near CD4-enriched regions on lymphoid cell surfaces (PubMed:11181151). Identified by mass spectrometry in melanosome fractions from stage I to stage IV (PubMed:10636893). Colocalizes with MTTP in the endoplasmic reticulum (PubMed:23475612).</text>
</comment>
<comment type="PTM">
    <text evidence="20">Phosphorylation of Ser-357 by FAM20C is induced by endoplasmic reticulum stress and results in a functional switch from oxidoreductase to molecular chaperone (PubMed:32149426). It also promotes interaction with ERN1 (PubMed:32149426).</text>
</comment>
<comment type="disease" evidence="17">
    <disease id="DI-04383">
        <name>Cole-Carpenter syndrome 1</name>
        <acronym>CLCRP1</acronym>
        <description>A form of Cole-Carpenter syndrome, a disorder characterized by features of osteogenesis imperfecta such as bone deformities and severe bone fragility with frequent fractures, in association with craniosynostosis, ocular proptosis, hydrocephalus, growth failure and distinctive facial features. Craniofacial findings include marked frontal bossing, midface hypoplasia, and micrognathia. Despite the craniosynostosis and hydrocephalus, intellectual development is normal. CLCRP1 inheritance is autosomal dominant.</description>
        <dbReference type="MIM" id="112240"/>
    </disease>
    <text>The disease is caused by variants affecting the gene represented in this entry.</text>
</comment>
<comment type="miscellaneous">
    <text>Reduces and may activate fusogenic properties of HIV-1 gp120 surface protein, thereby enabling HIV-1 entry into the cell.</text>
</comment>
<comment type="similarity">
    <text evidence="25">Belongs to the protein disulfide isomerase family.</text>
</comment>
<organism>
    <name type="scientific">Homo sapiens</name>
    <name type="common">Human</name>
    <dbReference type="NCBI Taxonomy" id="9606"/>
    <lineage>
        <taxon>Eukaryota</taxon>
        <taxon>Metazoa</taxon>
        <taxon>Chordata</taxon>
        <taxon>Craniata</taxon>
        <taxon>Vertebrata</taxon>
        <taxon>Euteleostomi</taxon>
        <taxon>Mammalia</taxon>
        <taxon>Eutheria</taxon>
        <taxon>Euarchontoglires</taxon>
        <taxon>Primates</taxon>
        <taxon>Haplorrhini</taxon>
        <taxon>Catarrhini</taxon>
        <taxon>Hominidae</taxon>
        <taxon>Homo</taxon>
    </lineage>
</organism>
<name>PDIA1_HUMAN</name>
<accession>P07237</accession>
<accession>B2RDQ2</accession>
<accession>P30037</accession>
<accession>P32079</accession>
<accession>Q15205</accession>
<accession>Q6LDE5</accession>
<keyword id="KW-0002">3D-structure</keyword>
<keyword id="KW-0007">Acetylation</keyword>
<keyword id="KW-1003">Cell membrane</keyword>
<keyword id="KW-0143">Chaperone</keyword>
<keyword id="KW-0989">Craniosynostosis</keyword>
<keyword id="KW-0903">Direct protein sequencing</keyword>
<keyword id="KW-0225">Disease variant</keyword>
<keyword id="KW-1015">Disulfide bond</keyword>
<keyword id="KW-0256">Endoplasmic reticulum</keyword>
<keyword id="KW-0413">Isomerase</keyword>
<keyword id="KW-0472">Membrane</keyword>
<keyword id="KW-1065">Osteogenesis imperfecta</keyword>
<keyword id="KW-0597">Phosphoprotein</keyword>
<keyword id="KW-1267">Proteomics identification</keyword>
<keyword id="KW-0676">Redox-active center</keyword>
<keyword id="KW-1185">Reference proteome</keyword>
<keyword id="KW-0677">Repeat</keyword>
<keyword id="KW-0732">Signal</keyword>